<reference key="1">
    <citation type="journal article" date="1994" name="Biochemistry">
        <title>PRE5 and PRE6, the last missing genes encoding 20S proteasome subunits from yeast? Indication for a set of 14 different subunits in the eukaryotic proteasome core.</title>
        <authorList>
            <person name="Heinemeyer W."/>
            <person name="Troendle N."/>
            <person name="Albrecht G."/>
            <person name="Wolf D.H."/>
        </authorList>
    </citation>
    <scope>NUCLEOTIDE SEQUENCE [GENOMIC DNA]</scope>
    <source>
        <strain>ATCC 204508 / S288c</strain>
    </source>
</reference>
<reference key="2">
    <citation type="journal article" date="1997" name="Nature">
        <title>The nucleotide sequence of Saccharomyces cerevisiae chromosome XV.</title>
        <authorList>
            <person name="Dujon B."/>
            <person name="Albermann K."/>
            <person name="Aldea M."/>
            <person name="Alexandraki D."/>
            <person name="Ansorge W."/>
            <person name="Arino J."/>
            <person name="Benes V."/>
            <person name="Bohn C."/>
            <person name="Bolotin-Fukuhara M."/>
            <person name="Bordonne R."/>
            <person name="Boyer J."/>
            <person name="Camasses A."/>
            <person name="Casamayor A."/>
            <person name="Casas C."/>
            <person name="Cheret G."/>
            <person name="Cziepluch C."/>
            <person name="Daignan-Fornier B."/>
            <person name="Dang V.-D."/>
            <person name="de Haan M."/>
            <person name="Delius H."/>
            <person name="Durand P."/>
            <person name="Fairhead C."/>
            <person name="Feldmann H."/>
            <person name="Gaillon L."/>
            <person name="Galisson F."/>
            <person name="Gamo F.-J."/>
            <person name="Gancedo C."/>
            <person name="Goffeau A."/>
            <person name="Goulding S.E."/>
            <person name="Grivell L.A."/>
            <person name="Habbig B."/>
            <person name="Hand N.J."/>
            <person name="Hani J."/>
            <person name="Hattenhorst U."/>
            <person name="Hebling U."/>
            <person name="Hernando Y."/>
            <person name="Herrero E."/>
            <person name="Heumann K."/>
            <person name="Hiesel R."/>
            <person name="Hilger F."/>
            <person name="Hofmann B."/>
            <person name="Hollenberg C.P."/>
            <person name="Hughes B."/>
            <person name="Jauniaux J.-C."/>
            <person name="Kalogeropoulos A."/>
            <person name="Katsoulou C."/>
            <person name="Kordes E."/>
            <person name="Lafuente M.J."/>
            <person name="Landt O."/>
            <person name="Louis E.J."/>
            <person name="Maarse A.C."/>
            <person name="Madania A."/>
            <person name="Mannhaupt G."/>
            <person name="Marck C."/>
            <person name="Martin R.P."/>
            <person name="Mewes H.-W."/>
            <person name="Michaux G."/>
            <person name="Paces V."/>
            <person name="Parle-McDermott A.G."/>
            <person name="Pearson B.M."/>
            <person name="Perrin A."/>
            <person name="Pettersson B."/>
            <person name="Poch O."/>
            <person name="Pohl T.M."/>
            <person name="Poirey R."/>
            <person name="Portetelle D."/>
            <person name="Pujol A."/>
            <person name="Purnelle B."/>
            <person name="Ramezani Rad M."/>
            <person name="Rechmann S."/>
            <person name="Schwager C."/>
            <person name="Schweizer M."/>
            <person name="Sor F."/>
            <person name="Sterky F."/>
            <person name="Tarassov I.A."/>
            <person name="Teodoru C."/>
            <person name="Tettelin H."/>
            <person name="Thierry A."/>
            <person name="Tobiasch E."/>
            <person name="Tzermia M."/>
            <person name="Uhlen M."/>
            <person name="Unseld M."/>
            <person name="Valens M."/>
            <person name="Vandenbol M."/>
            <person name="Vetter I."/>
            <person name="Vlcek C."/>
            <person name="Voet M."/>
            <person name="Volckaert G."/>
            <person name="Voss H."/>
            <person name="Wambutt R."/>
            <person name="Wedler H."/>
            <person name="Wiemann S."/>
            <person name="Winsor B."/>
            <person name="Wolfe K.H."/>
            <person name="Zollner A."/>
            <person name="Zumstein E."/>
            <person name="Kleine K."/>
        </authorList>
    </citation>
    <scope>NUCLEOTIDE SEQUENCE [LARGE SCALE GENOMIC DNA]</scope>
    <source>
        <strain>ATCC 204508 / S288c</strain>
    </source>
</reference>
<reference key="3">
    <citation type="journal article" date="2014" name="G3 (Bethesda)">
        <title>The reference genome sequence of Saccharomyces cerevisiae: Then and now.</title>
        <authorList>
            <person name="Engel S.R."/>
            <person name="Dietrich F.S."/>
            <person name="Fisk D.G."/>
            <person name="Binkley G."/>
            <person name="Balakrishnan R."/>
            <person name="Costanzo M.C."/>
            <person name="Dwight S.S."/>
            <person name="Hitz B.C."/>
            <person name="Karra K."/>
            <person name="Nash R.S."/>
            <person name="Weng S."/>
            <person name="Wong E.D."/>
            <person name="Lloyd P."/>
            <person name="Skrzypek M.S."/>
            <person name="Miyasato S.R."/>
            <person name="Simison M."/>
            <person name="Cherry J.M."/>
        </authorList>
    </citation>
    <scope>GENOME REANNOTATION</scope>
    <source>
        <strain>ATCC 204508 / S288c</strain>
    </source>
</reference>
<reference key="4">
    <citation type="thesis" date="1991" institute="University of Stuttgart" country="Germany">
        <authorList>
            <person name="Troendle N."/>
        </authorList>
    </citation>
    <scope>PROTEIN SEQUENCE OF 112-133</scope>
</reference>
<reference key="5">
    <citation type="journal article" date="2001" name="EMBO J.">
        <title>Cic1, an adaptor protein specifically linking the 26S proteasome to its substrate, the SCF component Cdc4.</title>
        <authorList>
            <person name="Jaeger S."/>
            <person name="Strayle J."/>
            <person name="Heinemeyer W."/>
            <person name="Wolf D.H."/>
        </authorList>
    </citation>
    <scope>INTERACTION WITH CIC1</scope>
</reference>
<reference key="6">
    <citation type="journal article" date="2003" name="Nature">
        <title>Global analysis of protein localization in budding yeast.</title>
        <authorList>
            <person name="Huh W.-K."/>
            <person name="Falvo J.V."/>
            <person name="Gerke L.C."/>
            <person name="Carroll A.S."/>
            <person name="Howson R.W."/>
            <person name="Weissman J.S."/>
            <person name="O'Shea E.K."/>
        </authorList>
    </citation>
    <scope>SUBCELLULAR LOCATION [LARGE SCALE ANALYSIS]</scope>
</reference>
<reference key="7">
    <citation type="journal article" date="2003" name="Nature">
        <title>Global analysis of protein expression in yeast.</title>
        <authorList>
            <person name="Ghaemmaghami S."/>
            <person name="Huh W.-K."/>
            <person name="Bower K."/>
            <person name="Howson R.W."/>
            <person name="Belle A."/>
            <person name="Dephoure N."/>
            <person name="O'Shea E.K."/>
            <person name="Weissman J.S."/>
        </authorList>
    </citation>
    <scope>LEVEL OF PROTEIN EXPRESSION [LARGE SCALE ANALYSIS]</scope>
</reference>
<reference key="8">
    <citation type="journal article" date="2007" name="Proc. Natl. Acad. Sci. U.S.A.">
        <title>Analysis of phosphorylation sites on proteins from Saccharomyces cerevisiae by electron transfer dissociation (ETD) mass spectrometry.</title>
        <authorList>
            <person name="Chi A."/>
            <person name="Huttenhower C."/>
            <person name="Geer L.Y."/>
            <person name="Coon J.J."/>
            <person name="Syka J.E.P."/>
            <person name="Bai D.L."/>
            <person name="Shabanowitz J."/>
            <person name="Burke D.J."/>
            <person name="Troyanskaya O.G."/>
            <person name="Hunt D.F."/>
        </authorList>
    </citation>
    <scope>PHOSPHORYLATION [LARGE SCALE ANALYSIS] AT THR-60</scope>
    <scope>IDENTIFICATION BY MASS SPECTROMETRY [LARGE SCALE ANALYSIS]</scope>
</reference>
<reference key="9">
    <citation type="journal article" date="1997" name="Nature">
        <title>Structure of 20S proteasome from yeast at 2.4-A resolution.</title>
        <authorList>
            <person name="Groll M."/>
            <person name="Ditzel L."/>
            <person name="Loewe J."/>
            <person name="Stock D."/>
            <person name="Bochtler M."/>
            <person name="Bartunik H.D."/>
            <person name="Huber R."/>
        </authorList>
    </citation>
    <scope>X-RAY CRYSTALLOGRAPHY (1.9 ANGSTROMS) OF 3-343 OF COMPLEX WITH THE 20S PROTEASOME</scope>
</reference>
<reference key="10">
    <citation type="journal article" date="2000" name="Nature">
        <title>Structural basis for the activation of 20S proteasomes by 11S regulators.</title>
        <authorList>
            <person name="Whitby F.G."/>
            <person name="Masters E.I."/>
            <person name="Kramer L."/>
            <person name="Knowlton J.R."/>
            <person name="Yao Y."/>
            <person name="Wang C.C."/>
            <person name="Hill C.P."/>
        </authorList>
    </citation>
    <scope>X-RAY CRYSTALLOGRAPHY (3.2 ANGSTROMS) OF COMPLEX WITH THE 20S PROTEASOME</scope>
</reference>
<reference key="11">
    <citation type="journal article" date="2000" name="Nat. Struct. Biol.">
        <title>A gated channel into the proteasome core particle.</title>
        <authorList>
            <person name="Groll M."/>
            <person name="Bajorek M."/>
            <person name="Koehler A."/>
            <person name="Moroder L."/>
            <person name="Rubin D.M."/>
            <person name="Huber R."/>
            <person name="Glickman M.H."/>
            <person name="Finley D."/>
        </authorList>
    </citation>
    <scope>X-RAY CRYSTALLOGRAPHY (2.4 ANGSTROMS) OF 1-243 OF COMPLEX WITH THE 20S PROTEASOME</scope>
</reference>
<reference key="12">
    <citation type="journal article" date="2001" name="J. Mol. Biol.">
        <title>Crystal structure of the 20 S proteasome:TMC-95A complex: a non-covalent proteasome inhibitor.</title>
        <authorList>
            <person name="Groll M."/>
            <person name="Koguchi Y."/>
            <person name="Huber R."/>
            <person name="Kohno J."/>
        </authorList>
    </citation>
    <scope>X-RAY CRYSTALLOGRAPHY (3.0 ANGSTROMS) OF 3-243 OF COMPLEX WITH THE 20S PROTEASOME</scope>
</reference>
<reference key="13">
    <citation type="journal article" date="2006" name="Chem. Biol.">
        <title>TMC-95-based inhibitor design provides evidence for the catalytic versatility of the proteasome.</title>
        <authorList>
            <person name="Groll M."/>
            <person name="Goetz M."/>
            <person name="Kaiser M."/>
            <person name="Weyher E."/>
            <person name="Moroder L."/>
        </authorList>
    </citation>
    <scope>X-RAY CRYSTALLOGRAPHY (2.81 ANGSTROMS) OF 3-243 OF COMPLEX WITH THE 20S PROTEASOME</scope>
</reference>
<reference key="14">
    <citation type="journal article" date="2006" name="J. Am. Chem. Soc.">
        <title>Crystal structures of salinosporamide A (NPI-0052) and B (NPI-0047) in complex with the 20S proteasome reveal important consequences of beta-lactone ring opening and a mechanism for irreversible binding.</title>
        <authorList>
            <person name="Groll M."/>
            <person name="Huber R."/>
            <person name="Potts B.C.M."/>
        </authorList>
    </citation>
    <scope>X-RAY CRYSTALLOGRAPHY (2.8 ANGSTROMS) OF 3-243 OF COMPLEX WITH THE 20S PROTEASOME</scope>
</reference>
<reference key="15">
    <citation type="journal article" date="2006" name="Structure">
        <title>Crystal structure of the boronic acid-based proteasome inhibitor bortezomib in complex with the yeast 20S proteasome.</title>
        <authorList>
            <person name="Groll M."/>
            <person name="Berkers C.R."/>
            <person name="Ploegh H.L."/>
            <person name="Ovaa H."/>
        </authorList>
    </citation>
    <scope>X-RAY CRYSTALLOGRAPHY (2.8 ANGSTROMS) OF 3-243 OF COMPLEX WITH THE 20S PROTEASOME</scope>
</reference>
<reference key="16">
    <citation type="journal article" date="2010" name="Mol. Cell">
        <title>Structure of a Blm10 complex reveals common mechanisms for proteasome binding and gate opening.</title>
        <authorList>
            <person name="Sadre-Bazzaz K."/>
            <person name="Whitby F.G."/>
            <person name="Robinson H."/>
            <person name="Formosa T."/>
            <person name="Hill C.P."/>
        </authorList>
    </citation>
    <scope>X-RAY CRYSTALLOGRAPHY (3.0 ANGSTROMS) OF 17-243 IN COMPLEX WITH THE PROTEASOME</scope>
</reference>
<reference key="17">
    <citation type="journal article" date="2012" name="Proc. Natl. Acad. Sci. U.S.A.">
        <title>Near-atomic resolution structural model of the yeast 26S proteasome.</title>
        <authorList>
            <person name="Beck F."/>
            <person name="Unverdorben P."/>
            <person name="Bohn S."/>
            <person name="Schweitzer A."/>
            <person name="Pfeifer G."/>
            <person name="Sakata E."/>
            <person name="Nickell S."/>
            <person name="Plitzko J.M."/>
            <person name="Villa E."/>
            <person name="Baumeister W."/>
            <person name="Forster F."/>
        </authorList>
    </citation>
    <scope>STRUCTURE BY ELECTRON MICROSCOPY (7.4 ANGSTROMS) OF THE 26S PROTEASOME</scope>
</reference>
<accession>P40303</accession>
<accession>D6W229</accession>
<protein>
    <recommendedName>
        <fullName>Proteasome subunit alpha type-4</fullName>
    </recommendedName>
    <alternativeName>
        <fullName>Macropain subunit PRE6</fullName>
    </alternativeName>
    <alternativeName>
        <fullName>Multicatalytic endopeptidase complex subunit PRE6</fullName>
    </alternativeName>
    <alternativeName>
        <fullName>Proteasome component PRE6</fullName>
    </alternativeName>
    <alternativeName>
        <fullName>Proteinase YSCE subunit PRE6</fullName>
    </alternativeName>
</protein>
<organism>
    <name type="scientific">Saccharomyces cerevisiae (strain ATCC 204508 / S288c)</name>
    <name type="common">Baker's yeast</name>
    <dbReference type="NCBI Taxonomy" id="559292"/>
    <lineage>
        <taxon>Eukaryota</taxon>
        <taxon>Fungi</taxon>
        <taxon>Dikarya</taxon>
        <taxon>Ascomycota</taxon>
        <taxon>Saccharomycotina</taxon>
        <taxon>Saccharomycetes</taxon>
        <taxon>Saccharomycetales</taxon>
        <taxon>Saccharomycetaceae</taxon>
        <taxon>Saccharomyces</taxon>
    </lineage>
</organism>
<sequence>MSGYDRALSIFSPDGHIFQVEYALEAVKRGTCAVGVKGKNCVVLGCERRSTLKLQDTRITPSKVSKIDSHVVLSFSGLNADSRILIEKARVEAQSHRLTLEDPVTVEYLTRYVAGVQQRYTQSGGVRPFGVSTLIAGFDPRDDEPKLYQTEPSGIYSSWSAQTIGRNSKTVREFLEKNYDRKEPPATVEECVKLTVRSLLEVVQTGAKNIEITVVKPDSDIVALSSEEINQYVTQIEQEKQEQQEQDKKKKSNH</sequence>
<gene>
    <name type="primary">PRE6</name>
    <name type="ordered locus">YOL038W</name>
</gene>
<name>PSA4_YEAST</name>
<comment type="function">
    <text>The proteasome degrades poly-ubiquitinated proteins in the cytoplasm and in the nucleus. It is essential for the regulated turnover of proteins and for the removal of misfolded proteins. The proteasome is a multicatalytic proteinase complex that is characterized by its ability to cleave peptides with Arg, Phe, Tyr, Leu, and Glu adjacent to the leaving group at neutral or slightly basic pH. It has an ATP-dependent proteolytic activity.</text>
</comment>
<comment type="subunit">
    <text evidence="3 6">The 26S proteasome consists of a 20S proteasome core and two 19S regulatory subunits. The 20S proteasome core is composed of 28 subunits that are arranged in four stacked rings, resulting in a barrel-shaped structure. The two end rings are each formed by seven alpha subunits, and the two central rings are each formed by seven beta subunits. The catalytic chamber with the active sites is on the inside of the barrel. Interacts with CIC1.</text>
</comment>
<comment type="interaction">
    <interactant intactId="EBI-13980">
        <id>P40303</id>
    </interactant>
    <interactant intactId="EBI-24538">
        <id>P38779</id>
        <label>CIC1</label>
    </interactant>
    <organismsDiffer>false</organismsDiffer>
    <experiments>5</experiments>
</comment>
<comment type="interaction">
    <interactant intactId="EBI-13980">
        <id>P40303</id>
    </interactant>
    <interactant intactId="EBI-13988">
        <id>P22141</id>
        <label>PRE1</label>
    </interactant>
    <organismsDiffer>false</organismsDiffer>
    <experiments>7</experiments>
</comment>
<comment type="interaction">
    <interactant intactId="EBI-13980">
        <id>P40303</id>
    </interactant>
    <interactant intactId="EBI-14001">
        <id>P30656</id>
        <label>PRE2</label>
    </interactant>
    <organismsDiffer>false</organismsDiffer>
    <experiments>4</experiments>
</comment>
<comment type="interaction">
    <interactant intactId="EBI-13980">
        <id>P40303</id>
    </interactant>
    <interactant intactId="EBI-11219">
        <id>P43588</id>
        <label>RPN11</label>
    </interactant>
    <organismsDiffer>false</organismsDiffer>
    <experiments>2</experiments>
</comment>
<comment type="interaction">
    <interactant intactId="EBI-13980">
        <id>P40303</id>
    </interactant>
    <interactant intactId="EBI-1152591">
        <id>P38937</id>
        <label>cut8</label>
    </interactant>
    <organismsDiffer>true</organismsDiffer>
    <experiments>2</experiments>
</comment>
<comment type="subcellular location">
    <subcellularLocation>
        <location evidence="4">Cytoplasm</location>
    </subcellularLocation>
    <subcellularLocation>
        <location evidence="4">Nucleus</location>
    </subcellularLocation>
</comment>
<comment type="miscellaneous">
    <text evidence="5">Present with 16800 molecules/cell in log phase SD medium.</text>
</comment>
<comment type="similarity">
    <text evidence="1">Belongs to the peptidase T1A family.</text>
</comment>
<dbReference type="EMBL" id="L34348">
    <property type="protein sequence ID" value="AAA34903.1"/>
    <property type="molecule type" value="Genomic_DNA"/>
</dbReference>
<dbReference type="EMBL" id="Z74780">
    <property type="protein sequence ID" value="CAA99040.1"/>
    <property type="molecule type" value="Genomic_DNA"/>
</dbReference>
<dbReference type="EMBL" id="BK006948">
    <property type="protein sequence ID" value="DAA10745.1"/>
    <property type="molecule type" value="Genomic_DNA"/>
</dbReference>
<dbReference type="PIR" id="B55904">
    <property type="entry name" value="B55904"/>
</dbReference>
<dbReference type="RefSeq" id="NP_014604.1">
    <property type="nucleotide sequence ID" value="NM_001183292.1"/>
</dbReference>
<dbReference type="PDB" id="1FNT">
    <property type="method" value="X-ray"/>
    <property type="resolution" value="3.20 A"/>
    <property type="chains" value="D/R=1-254"/>
</dbReference>
<dbReference type="PDB" id="1G0U">
    <property type="method" value="X-ray"/>
    <property type="resolution" value="2.40 A"/>
    <property type="chains" value="C/Q=1-243"/>
</dbReference>
<dbReference type="PDB" id="1G65">
    <property type="method" value="X-ray"/>
    <property type="resolution" value="2.25 A"/>
    <property type="chains" value="C/Q=3-243"/>
</dbReference>
<dbReference type="PDB" id="1JD2">
    <property type="method" value="X-ray"/>
    <property type="resolution" value="3.00 A"/>
    <property type="chains" value="C/X=3-243"/>
</dbReference>
<dbReference type="PDB" id="1RYP">
    <property type="method" value="X-ray"/>
    <property type="resolution" value="1.90 A"/>
    <property type="chains" value="D/R=3-243"/>
</dbReference>
<dbReference type="PDB" id="1Z7Q">
    <property type="method" value="X-ray"/>
    <property type="resolution" value="3.22 A"/>
    <property type="chains" value="D/R=1-254"/>
</dbReference>
<dbReference type="PDB" id="2F16">
    <property type="method" value="X-ray"/>
    <property type="resolution" value="2.80 A"/>
    <property type="chains" value="C/Q=3-243"/>
</dbReference>
<dbReference type="PDB" id="2FAK">
    <property type="method" value="X-ray"/>
    <property type="resolution" value="2.80 A"/>
    <property type="chains" value="C/Q=3-243"/>
</dbReference>
<dbReference type="PDB" id="2GPL">
    <property type="method" value="X-ray"/>
    <property type="resolution" value="2.81 A"/>
    <property type="chains" value="C/Q=3-243"/>
</dbReference>
<dbReference type="PDB" id="2ZCY">
    <property type="method" value="X-ray"/>
    <property type="resolution" value="2.90 A"/>
    <property type="chains" value="C/Q=1-254"/>
</dbReference>
<dbReference type="PDB" id="3BDM">
    <property type="method" value="X-ray"/>
    <property type="resolution" value="2.70 A"/>
    <property type="chains" value="C/Q=1-254"/>
</dbReference>
<dbReference type="PDB" id="3D29">
    <property type="method" value="X-ray"/>
    <property type="resolution" value="2.60 A"/>
    <property type="chains" value="C/Q=3-236"/>
</dbReference>
<dbReference type="PDB" id="3DY3">
    <property type="method" value="X-ray"/>
    <property type="resolution" value="2.81 A"/>
    <property type="chains" value="C/Q=3-243"/>
</dbReference>
<dbReference type="PDB" id="3DY4">
    <property type="method" value="X-ray"/>
    <property type="resolution" value="2.80 A"/>
    <property type="chains" value="C/Q=3-243"/>
</dbReference>
<dbReference type="PDB" id="3E47">
    <property type="method" value="X-ray"/>
    <property type="resolution" value="3.00 A"/>
    <property type="chains" value="C/Q=3-243"/>
</dbReference>
<dbReference type="PDB" id="3GPJ">
    <property type="method" value="X-ray"/>
    <property type="resolution" value="2.70 A"/>
    <property type="chains" value="C/Q=3-243"/>
</dbReference>
<dbReference type="PDB" id="3GPT">
    <property type="method" value="X-ray"/>
    <property type="resolution" value="2.41 A"/>
    <property type="chains" value="C/Q=3-243"/>
</dbReference>
<dbReference type="PDB" id="3GPW">
    <property type="method" value="X-ray"/>
    <property type="resolution" value="2.50 A"/>
    <property type="chains" value="C/Q=3-243"/>
</dbReference>
<dbReference type="PDB" id="3HYE">
    <property type="method" value="X-ray"/>
    <property type="resolution" value="2.50 A"/>
    <property type="chains" value="C/Q=3-243"/>
</dbReference>
<dbReference type="PDB" id="3JCO">
    <property type="method" value="EM"/>
    <property type="resolution" value="4.80 A"/>
    <property type="chains" value="D/d=1-254"/>
</dbReference>
<dbReference type="PDB" id="3JCP">
    <property type="method" value="EM"/>
    <property type="resolution" value="4.60 A"/>
    <property type="chains" value="D/d=1-254"/>
</dbReference>
<dbReference type="PDB" id="3MG0">
    <property type="method" value="X-ray"/>
    <property type="resolution" value="2.68 A"/>
    <property type="chains" value="C/Q=3-243"/>
</dbReference>
<dbReference type="PDB" id="3MG4">
    <property type="method" value="X-ray"/>
    <property type="resolution" value="3.11 A"/>
    <property type="chains" value="C/Q=3-243"/>
</dbReference>
<dbReference type="PDB" id="3MG6">
    <property type="method" value="X-ray"/>
    <property type="resolution" value="2.60 A"/>
    <property type="chains" value="C/Q=1-243"/>
</dbReference>
<dbReference type="PDB" id="3MG7">
    <property type="method" value="X-ray"/>
    <property type="resolution" value="2.78 A"/>
    <property type="chains" value="C/Q=1-243"/>
</dbReference>
<dbReference type="PDB" id="3MG8">
    <property type="method" value="X-ray"/>
    <property type="resolution" value="2.59 A"/>
    <property type="chains" value="C/Q=1-243"/>
</dbReference>
<dbReference type="PDB" id="3NZJ">
    <property type="method" value="X-ray"/>
    <property type="resolution" value="2.40 A"/>
    <property type="chains" value="C/Q=1-254"/>
</dbReference>
<dbReference type="PDB" id="3NZW">
    <property type="method" value="X-ray"/>
    <property type="resolution" value="2.50 A"/>
    <property type="chains" value="C/Q=1-254"/>
</dbReference>
<dbReference type="PDB" id="3NZX">
    <property type="method" value="X-ray"/>
    <property type="resolution" value="2.70 A"/>
    <property type="chains" value="C/Q=1-254"/>
</dbReference>
<dbReference type="PDB" id="3OEU">
    <property type="method" value="X-ray"/>
    <property type="resolution" value="2.60 A"/>
    <property type="chains" value="C/Q=3-243"/>
</dbReference>
<dbReference type="PDB" id="3OEV">
    <property type="method" value="X-ray"/>
    <property type="resolution" value="2.85 A"/>
    <property type="chains" value="C/Q=3-243"/>
</dbReference>
<dbReference type="PDB" id="3OKJ">
    <property type="method" value="X-ray"/>
    <property type="resolution" value="2.70 A"/>
    <property type="chains" value="C/Q=3-243"/>
</dbReference>
<dbReference type="PDB" id="3SDI">
    <property type="method" value="X-ray"/>
    <property type="resolution" value="2.65 A"/>
    <property type="chains" value="C/Q=3-243"/>
</dbReference>
<dbReference type="PDB" id="3SDK">
    <property type="method" value="X-ray"/>
    <property type="resolution" value="2.70 A"/>
    <property type="chains" value="C/Q=3-243"/>
</dbReference>
<dbReference type="PDB" id="3SHJ">
    <property type="method" value="X-ray"/>
    <property type="resolution" value="2.80 A"/>
    <property type="chains" value="C/Q=3-243"/>
</dbReference>
<dbReference type="PDB" id="3TDD">
    <property type="method" value="X-ray"/>
    <property type="resolution" value="2.70 A"/>
    <property type="chains" value="C/Q=3-243"/>
</dbReference>
<dbReference type="PDB" id="3UN4">
    <property type="method" value="X-ray"/>
    <property type="resolution" value="3.40 A"/>
    <property type="chains" value="C/Q=1-254"/>
</dbReference>
<dbReference type="PDB" id="3UN8">
    <property type="method" value="X-ray"/>
    <property type="resolution" value="2.70 A"/>
    <property type="chains" value="C/Q=1-254"/>
</dbReference>
<dbReference type="PDB" id="3WXR">
    <property type="method" value="X-ray"/>
    <property type="resolution" value="3.15 A"/>
    <property type="chains" value="D/R=1-254"/>
</dbReference>
<dbReference type="PDB" id="4CR2">
    <property type="method" value="EM"/>
    <property type="resolution" value="7.70 A"/>
    <property type="chains" value="D=1-254"/>
</dbReference>
<dbReference type="PDB" id="4CR3">
    <property type="method" value="EM"/>
    <property type="resolution" value="9.30 A"/>
    <property type="chains" value="D=1-254"/>
</dbReference>
<dbReference type="PDB" id="4CR4">
    <property type="method" value="EM"/>
    <property type="resolution" value="8.80 A"/>
    <property type="chains" value="D=1-254"/>
</dbReference>
<dbReference type="PDB" id="4EU2">
    <property type="method" value="X-ray"/>
    <property type="resolution" value="2.51 A"/>
    <property type="chains" value="D/R=3-243"/>
</dbReference>
<dbReference type="PDB" id="4FZC">
    <property type="method" value="X-ray"/>
    <property type="resolution" value="2.80 A"/>
    <property type="chains" value="C/Q=3-243"/>
</dbReference>
<dbReference type="PDB" id="4FZG">
    <property type="method" value="X-ray"/>
    <property type="resolution" value="3.00 A"/>
    <property type="chains" value="C/Q=3-243"/>
</dbReference>
<dbReference type="PDB" id="4G4S">
    <property type="method" value="X-ray"/>
    <property type="resolution" value="2.49 A"/>
    <property type="chains" value="D=1-254"/>
</dbReference>
<dbReference type="PDB" id="4GK7">
    <property type="method" value="X-ray"/>
    <property type="resolution" value="2.80 A"/>
    <property type="chains" value="C/Q=3-243"/>
</dbReference>
<dbReference type="PDB" id="4HNP">
    <property type="method" value="X-ray"/>
    <property type="resolution" value="2.80 A"/>
    <property type="chains" value="C/Q=3-243"/>
</dbReference>
<dbReference type="PDB" id="4HRC">
    <property type="method" value="X-ray"/>
    <property type="resolution" value="2.80 A"/>
    <property type="chains" value="C/Q=3-243"/>
</dbReference>
<dbReference type="PDB" id="4HRD">
    <property type="method" value="X-ray"/>
    <property type="resolution" value="2.80 A"/>
    <property type="chains" value="C/Q=3-243"/>
</dbReference>
<dbReference type="PDB" id="4INR">
    <property type="method" value="X-ray"/>
    <property type="resolution" value="2.70 A"/>
    <property type="chains" value="C/Q=1-254"/>
</dbReference>
<dbReference type="PDB" id="4INT">
    <property type="method" value="X-ray"/>
    <property type="resolution" value="2.90 A"/>
    <property type="chains" value="C/Q=1-254"/>
</dbReference>
<dbReference type="PDB" id="4INU">
    <property type="method" value="X-ray"/>
    <property type="resolution" value="3.10 A"/>
    <property type="chains" value="C/Q=1-254"/>
</dbReference>
<dbReference type="PDB" id="4J70">
    <property type="method" value="X-ray"/>
    <property type="resolution" value="2.80 A"/>
    <property type="chains" value="C/Q=1-254"/>
</dbReference>
<dbReference type="PDB" id="4JSQ">
    <property type="method" value="X-ray"/>
    <property type="resolution" value="2.80 A"/>
    <property type="chains" value="C/Q=1-254"/>
</dbReference>
<dbReference type="PDB" id="4JSU">
    <property type="method" value="X-ray"/>
    <property type="resolution" value="2.90 A"/>
    <property type="chains" value="C/Q=1-254"/>
</dbReference>
<dbReference type="PDB" id="4JT0">
    <property type="method" value="X-ray"/>
    <property type="resolution" value="3.10 A"/>
    <property type="chains" value="C/Q=1-254"/>
</dbReference>
<dbReference type="PDB" id="4LQI">
    <property type="method" value="X-ray"/>
    <property type="resolution" value="2.70 A"/>
    <property type="chains" value="C/Q=3-243"/>
</dbReference>
<dbReference type="PDB" id="4LTC">
    <property type="method" value="X-ray"/>
    <property type="resolution" value="2.50 A"/>
    <property type="chains" value="C/Q=1-254"/>
</dbReference>
<dbReference type="PDB" id="4NNN">
    <property type="method" value="X-ray"/>
    <property type="resolution" value="2.50 A"/>
    <property type="chains" value="C/Q=1-254"/>
</dbReference>
<dbReference type="PDB" id="4NNW">
    <property type="method" value="X-ray"/>
    <property type="resolution" value="2.60 A"/>
    <property type="chains" value="C/Q=1-254"/>
</dbReference>
<dbReference type="PDB" id="4NO1">
    <property type="method" value="X-ray"/>
    <property type="resolution" value="2.50 A"/>
    <property type="chains" value="C/Q=1-254"/>
</dbReference>
<dbReference type="PDB" id="4NO6">
    <property type="method" value="X-ray"/>
    <property type="resolution" value="3.00 A"/>
    <property type="chains" value="C/Q=1-254"/>
</dbReference>
<dbReference type="PDB" id="4NO8">
    <property type="method" value="X-ray"/>
    <property type="resolution" value="2.70 A"/>
    <property type="chains" value="C/Q=1-254"/>
</dbReference>
<dbReference type="PDB" id="4NO9">
    <property type="method" value="X-ray"/>
    <property type="resolution" value="2.90 A"/>
    <property type="chains" value="C/Q=1-254"/>
</dbReference>
<dbReference type="PDB" id="4Q1S">
    <property type="method" value="X-ray"/>
    <property type="resolution" value="2.60 A"/>
    <property type="chains" value="C/Q=1-254"/>
</dbReference>
<dbReference type="PDB" id="4QBY">
    <property type="method" value="X-ray"/>
    <property type="resolution" value="3.00 A"/>
    <property type="chains" value="C/Q=1-254"/>
</dbReference>
<dbReference type="PDB" id="4QLQ">
    <property type="method" value="X-ray"/>
    <property type="resolution" value="2.40 A"/>
    <property type="chains" value="C/Q=1-254"/>
</dbReference>
<dbReference type="PDB" id="4QLS">
    <property type="method" value="X-ray"/>
    <property type="resolution" value="2.80 A"/>
    <property type="chains" value="C/Q=1-254"/>
</dbReference>
<dbReference type="PDB" id="4QLT">
    <property type="method" value="X-ray"/>
    <property type="resolution" value="2.80 A"/>
    <property type="chains" value="C/Q=1-254"/>
</dbReference>
<dbReference type="PDB" id="4QLU">
    <property type="method" value="X-ray"/>
    <property type="resolution" value="2.80 A"/>
    <property type="chains" value="C/Q=1-254"/>
</dbReference>
<dbReference type="PDB" id="4QLV">
    <property type="method" value="X-ray"/>
    <property type="resolution" value="2.90 A"/>
    <property type="chains" value="C/Q=1-254"/>
</dbReference>
<dbReference type="PDB" id="4QUX">
    <property type="method" value="X-ray"/>
    <property type="resolution" value="3.00 A"/>
    <property type="chains" value="C/Q=1-254"/>
</dbReference>
<dbReference type="PDB" id="4QUY">
    <property type="method" value="X-ray"/>
    <property type="resolution" value="2.80 A"/>
    <property type="chains" value="C/Q=1-254"/>
</dbReference>
<dbReference type="PDB" id="4QV0">
    <property type="method" value="X-ray"/>
    <property type="resolution" value="3.10 A"/>
    <property type="chains" value="C/Q=1-254"/>
</dbReference>
<dbReference type="PDB" id="4QV1">
    <property type="method" value="X-ray"/>
    <property type="resolution" value="2.50 A"/>
    <property type="chains" value="C/Q=1-254"/>
</dbReference>
<dbReference type="PDB" id="4QV3">
    <property type="method" value="X-ray"/>
    <property type="resolution" value="3.00 A"/>
    <property type="chains" value="C/Q=1-254"/>
</dbReference>
<dbReference type="PDB" id="4QV4">
    <property type="method" value="X-ray"/>
    <property type="resolution" value="2.70 A"/>
    <property type="chains" value="C/Q=1-254"/>
</dbReference>
<dbReference type="PDB" id="4QV5">
    <property type="method" value="X-ray"/>
    <property type="resolution" value="2.70 A"/>
    <property type="chains" value="C/Q=1-254"/>
</dbReference>
<dbReference type="PDB" id="4QV6">
    <property type="method" value="X-ray"/>
    <property type="resolution" value="2.80 A"/>
    <property type="chains" value="C/Q=1-254"/>
</dbReference>
<dbReference type="PDB" id="4QV7">
    <property type="method" value="X-ray"/>
    <property type="resolution" value="2.60 A"/>
    <property type="chains" value="C/Q=1-254"/>
</dbReference>
<dbReference type="PDB" id="4QV8">
    <property type="method" value="X-ray"/>
    <property type="resolution" value="2.90 A"/>
    <property type="chains" value="C/Q=1-254"/>
</dbReference>
<dbReference type="PDB" id="4QV9">
    <property type="method" value="X-ray"/>
    <property type="resolution" value="2.60 A"/>
    <property type="chains" value="C/Q=1-254"/>
</dbReference>
<dbReference type="PDB" id="4QVL">
    <property type="method" value="X-ray"/>
    <property type="resolution" value="2.80 A"/>
    <property type="chains" value="C/Q=1-254"/>
</dbReference>
<dbReference type="PDB" id="4QVM">
    <property type="method" value="X-ray"/>
    <property type="resolution" value="2.80 A"/>
    <property type="chains" value="C/Q=1-254"/>
</dbReference>
<dbReference type="PDB" id="4QVN">
    <property type="method" value="X-ray"/>
    <property type="resolution" value="2.90 A"/>
    <property type="chains" value="C/Q=1-254"/>
</dbReference>
<dbReference type="PDB" id="4QVP">
    <property type="method" value="X-ray"/>
    <property type="resolution" value="2.30 A"/>
    <property type="chains" value="C/Q=1-254"/>
</dbReference>
<dbReference type="PDB" id="4QVQ">
    <property type="method" value="X-ray"/>
    <property type="resolution" value="2.60 A"/>
    <property type="chains" value="C/Q=1-254"/>
</dbReference>
<dbReference type="PDB" id="4QVV">
    <property type="method" value="X-ray"/>
    <property type="resolution" value="2.80 A"/>
    <property type="chains" value="C/Q=1-254"/>
</dbReference>
<dbReference type="PDB" id="4QVW">
    <property type="method" value="X-ray"/>
    <property type="resolution" value="3.00 A"/>
    <property type="chains" value="C/Q=1-254"/>
</dbReference>
<dbReference type="PDB" id="4QVY">
    <property type="method" value="X-ray"/>
    <property type="resolution" value="2.51 A"/>
    <property type="chains" value="C/Q=1-254"/>
</dbReference>
<dbReference type="PDB" id="4QW0">
    <property type="method" value="X-ray"/>
    <property type="resolution" value="2.90 A"/>
    <property type="chains" value="C/Q=1-254"/>
</dbReference>
<dbReference type="PDB" id="4QW1">
    <property type="method" value="X-ray"/>
    <property type="resolution" value="2.90 A"/>
    <property type="chains" value="C/Q=1-254"/>
</dbReference>
<dbReference type="PDB" id="4QW3">
    <property type="method" value="X-ray"/>
    <property type="resolution" value="2.90 A"/>
    <property type="chains" value="C/Q=1-254"/>
</dbReference>
<dbReference type="PDB" id="4QW4">
    <property type="method" value="X-ray"/>
    <property type="resolution" value="2.80 A"/>
    <property type="chains" value="C/Q=1-254"/>
</dbReference>
<dbReference type="PDB" id="4QW5">
    <property type="method" value="X-ray"/>
    <property type="resolution" value="3.00 A"/>
    <property type="chains" value="C/Q=1-254"/>
</dbReference>
<dbReference type="PDB" id="4QW6">
    <property type="method" value="X-ray"/>
    <property type="resolution" value="2.90 A"/>
    <property type="chains" value="C/Q=1-254"/>
</dbReference>
<dbReference type="PDB" id="4QW7">
    <property type="method" value="X-ray"/>
    <property type="resolution" value="2.70 A"/>
    <property type="chains" value="C/Q=1-254"/>
</dbReference>
<dbReference type="PDB" id="4QWF">
    <property type="method" value="X-ray"/>
    <property type="resolution" value="3.00 A"/>
    <property type="chains" value="C/Q=1-254"/>
</dbReference>
<dbReference type="PDB" id="4QWG">
    <property type="method" value="X-ray"/>
    <property type="resolution" value="2.60 A"/>
    <property type="chains" value="C/Q=1-254"/>
</dbReference>
<dbReference type="PDB" id="4QWI">
    <property type="method" value="X-ray"/>
    <property type="resolution" value="2.60 A"/>
    <property type="chains" value="C/Q=1-254"/>
</dbReference>
<dbReference type="PDB" id="4QWJ">
    <property type="method" value="X-ray"/>
    <property type="resolution" value="2.90 A"/>
    <property type="chains" value="C/Q=1-254"/>
</dbReference>
<dbReference type="PDB" id="4QWK">
    <property type="method" value="X-ray"/>
    <property type="resolution" value="2.80 A"/>
    <property type="chains" value="C/Q=1-254"/>
</dbReference>
<dbReference type="PDB" id="4QWL">
    <property type="method" value="X-ray"/>
    <property type="resolution" value="2.60 A"/>
    <property type="chains" value="C/Q=1-254"/>
</dbReference>
<dbReference type="PDB" id="4QWR">
    <property type="method" value="X-ray"/>
    <property type="resolution" value="2.90 A"/>
    <property type="chains" value="C/Q=1-254"/>
</dbReference>
<dbReference type="PDB" id="4QWS">
    <property type="method" value="X-ray"/>
    <property type="resolution" value="3.00 A"/>
    <property type="chains" value="C/Q=1-254"/>
</dbReference>
<dbReference type="PDB" id="4QWU">
    <property type="method" value="X-ray"/>
    <property type="resolution" value="3.00 A"/>
    <property type="chains" value="C/Q=1-254"/>
</dbReference>
<dbReference type="PDB" id="4QWX">
    <property type="method" value="X-ray"/>
    <property type="resolution" value="2.90 A"/>
    <property type="chains" value="C/Q=1-254"/>
</dbReference>
<dbReference type="PDB" id="4QXJ">
    <property type="method" value="X-ray"/>
    <property type="resolution" value="2.80 A"/>
    <property type="chains" value="C/Q=1-254"/>
</dbReference>
<dbReference type="PDB" id="4QZ0">
    <property type="method" value="X-ray"/>
    <property type="resolution" value="3.00 A"/>
    <property type="chains" value="C/Q=1-254"/>
</dbReference>
<dbReference type="PDB" id="4QZ1">
    <property type="method" value="X-ray"/>
    <property type="resolution" value="3.00 A"/>
    <property type="chains" value="C/Q=1-254"/>
</dbReference>
<dbReference type="PDB" id="4QZ2">
    <property type="method" value="X-ray"/>
    <property type="resolution" value="2.70 A"/>
    <property type="chains" value="C/Q=1-254"/>
</dbReference>
<dbReference type="PDB" id="4QZ3">
    <property type="method" value="X-ray"/>
    <property type="resolution" value="2.80 A"/>
    <property type="chains" value="C/Q=1-254"/>
</dbReference>
<dbReference type="PDB" id="4QZ4">
    <property type="method" value="X-ray"/>
    <property type="resolution" value="3.00 A"/>
    <property type="chains" value="C/Q=1-254"/>
</dbReference>
<dbReference type="PDB" id="4QZ5">
    <property type="method" value="X-ray"/>
    <property type="resolution" value="2.80 A"/>
    <property type="chains" value="C/Q=1-254"/>
</dbReference>
<dbReference type="PDB" id="4QZ6">
    <property type="method" value="X-ray"/>
    <property type="resolution" value="2.90 A"/>
    <property type="chains" value="C/Q=1-254"/>
</dbReference>
<dbReference type="PDB" id="4QZ7">
    <property type="method" value="X-ray"/>
    <property type="resolution" value="2.80 A"/>
    <property type="chains" value="C/Q=1-254"/>
</dbReference>
<dbReference type="PDB" id="4QZW">
    <property type="method" value="X-ray"/>
    <property type="resolution" value="3.00 A"/>
    <property type="chains" value="C/Q=1-254"/>
</dbReference>
<dbReference type="PDB" id="4QZX">
    <property type="method" value="X-ray"/>
    <property type="resolution" value="2.60 A"/>
    <property type="chains" value="C/Q=1-254"/>
</dbReference>
<dbReference type="PDB" id="4QZZ">
    <property type="method" value="X-ray"/>
    <property type="resolution" value="2.90 A"/>
    <property type="chains" value="C/Q=1-254"/>
</dbReference>
<dbReference type="PDB" id="4R00">
    <property type="method" value="X-ray"/>
    <property type="resolution" value="2.80 A"/>
    <property type="chains" value="C/Q=1-254"/>
</dbReference>
<dbReference type="PDB" id="4R02">
    <property type="method" value="X-ray"/>
    <property type="resolution" value="2.50 A"/>
    <property type="chains" value="C/Q=1-254"/>
</dbReference>
<dbReference type="PDB" id="4R17">
    <property type="method" value="X-ray"/>
    <property type="resolution" value="2.10 A"/>
    <property type="chains" value="C/Q=1-254"/>
</dbReference>
<dbReference type="PDB" id="4R18">
    <property type="method" value="X-ray"/>
    <property type="resolution" value="2.40 A"/>
    <property type="chains" value="C/Q=1-254"/>
</dbReference>
<dbReference type="PDB" id="4RUR">
    <property type="method" value="X-ray"/>
    <property type="resolution" value="2.50 A"/>
    <property type="chains" value="C/Q=1-254"/>
</dbReference>
<dbReference type="PDB" id="4V7O">
    <property type="method" value="X-ray"/>
    <property type="resolution" value="3.00 A"/>
    <property type="chains" value="AI/AU/BD/BR=17-243"/>
</dbReference>
<dbReference type="PDB" id="4X6Z">
    <property type="method" value="X-ray"/>
    <property type="resolution" value="2.70 A"/>
    <property type="chains" value="D/R=1-254"/>
</dbReference>
<dbReference type="PDB" id="4Y69">
    <property type="method" value="X-ray"/>
    <property type="resolution" value="2.90 A"/>
    <property type="chains" value="C/Q=1-254"/>
</dbReference>
<dbReference type="PDB" id="4Y6A">
    <property type="method" value="X-ray"/>
    <property type="resolution" value="2.60 A"/>
    <property type="chains" value="C/Q=1-254"/>
</dbReference>
<dbReference type="PDB" id="4Y6V">
    <property type="method" value="X-ray"/>
    <property type="resolution" value="2.80 A"/>
    <property type="chains" value="C/Q=1-254"/>
</dbReference>
<dbReference type="PDB" id="4Y6Z">
    <property type="method" value="X-ray"/>
    <property type="resolution" value="2.70 A"/>
    <property type="chains" value="C/Q=1-254"/>
</dbReference>
<dbReference type="PDB" id="4Y70">
    <property type="method" value="X-ray"/>
    <property type="resolution" value="2.40 A"/>
    <property type="chains" value="C/Q=1-254"/>
</dbReference>
<dbReference type="PDB" id="4Y74">
    <property type="method" value="X-ray"/>
    <property type="resolution" value="2.70 A"/>
    <property type="chains" value="C/Q=1-254"/>
</dbReference>
<dbReference type="PDB" id="4Y75">
    <property type="method" value="X-ray"/>
    <property type="resolution" value="2.80 A"/>
    <property type="chains" value="C/Q=1-254"/>
</dbReference>
<dbReference type="PDB" id="4Y77">
    <property type="method" value="X-ray"/>
    <property type="resolution" value="2.50 A"/>
    <property type="chains" value="C/Q=1-254"/>
</dbReference>
<dbReference type="PDB" id="4Y78">
    <property type="method" value="X-ray"/>
    <property type="resolution" value="2.80 A"/>
    <property type="chains" value="C/Q=1-254"/>
</dbReference>
<dbReference type="PDB" id="4Y7W">
    <property type="method" value="X-ray"/>
    <property type="resolution" value="2.50 A"/>
    <property type="chains" value="C/Q=1-254"/>
</dbReference>
<dbReference type="PDB" id="4Y7X">
    <property type="method" value="X-ray"/>
    <property type="resolution" value="2.60 A"/>
    <property type="chains" value="C/Q=1-254"/>
</dbReference>
<dbReference type="PDB" id="4Y7Y">
    <property type="method" value="X-ray"/>
    <property type="resolution" value="2.40 A"/>
    <property type="chains" value="C/Q=1-254"/>
</dbReference>
<dbReference type="PDB" id="4Y80">
    <property type="method" value="X-ray"/>
    <property type="resolution" value="2.50 A"/>
    <property type="chains" value="C/Q=1-254"/>
</dbReference>
<dbReference type="PDB" id="4Y81">
    <property type="method" value="X-ray"/>
    <property type="resolution" value="2.80 A"/>
    <property type="chains" value="C/Q=1-254"/>
</dbReference>
<dbReference type="PDB" id="4Y82">
    <property type="method" value="X-ray"/>
    <property type="resolution" value="2.80 A"/>
    <property type="chains" value="C/Q=1-254"/>
</dbReference>
<dbReference type="PDB" id="4Y84">
    <property type="method" value="X-ray"/>
    <property type="resolution" value="2.70 A"/>
    <property type="chains" value="C/Q=1-254"/>
</dbReference>
<dbReference type="PDB" id="4Y8G">
    <property type="method" value="X-ray"/>
    <property type="resolution" value="2.60 A"/>
    <property type="chains" value="C/Q=1-254"/>
</dbReference>
<dbReference type="PDB" id="4Y8H">
    <property type="method" value="X-ray"/>
    <property type="resolution" value="2.50 A"/>
    <property type="chains" value="C/Q=1-254"/>
</dbReference>
<dbReference type="PDB" id="4Y8I">
    <property type="method" value="X-ray"/>
    <property type="resolution" value="2.60 A"/>
    <property type="chains" value="C/Q=1-254"/>
</dbReference>
<dbReference type="PDB" id="4Y8J">
    <property type="method" value="X-ray"/>
    <property type="resolution" value="2.70 A"/>
    <property type="chains" value="C/Q=1-254"/>
</dbReference>
<dbReference type="PDB" id="4Y8K">
    <property type="method" value="X-ray"/>
    <property type="resolution" value="2.60 A"/>
    <property type="chains" value="C/Q=1-254"/>
</dbReference>
<dbReference type="PDB" id="4Y8L">
    <property type="method" value="X-ray"/>
    <property type="resolution" value="2.40 A"/>
    <property type="chains" value="C/Q=1-254"/>
</dbReference>
<dbReference type="PDB" id="4Y8M">
    <property type="method" value="X-ray"/>
    <property type="resolution" value="2.80 A"/>
    <property type="chains" value="C/Q=1-254"/>
</dbReference>
<dbReference type="PDB" id="4Y8N">
    <property type="method" value="X-ray"/>
    <property type="resolution" value="2.60 A"/>
    <property type="chains" value="C/Q=1-254"/>
</dbReference>
<dbReference type="PDB" id="4Y8O">
    <property type="method" value="X-ray"/>
    <property type="resolution" value="2.70 A"/>
    <property type="chains" value="C/Q=1-254"/>
</dbReference>
<dbReference type="PDB" id="4Y8P">
    <property type="method" value="X-ray"/>
    <property type="resolution" value="2.80 A"/>
    <property type="chains" value="C/Q=1-254"/>
</dbReference>
<dbReference type="PDB" id="4Y8Q">
    <property type="method" value="X-ray"/>
    <property type="resolution" value="2.60 A"/>
    <property type="chains" value="C/Q=1-254"/>
</dbReference>
<dbReference type="PDB" id="4Y8R">
    <property type="method" value="X-ray"/>
    <property type="resolution" value="2.70 A"/>
    <property type="chains" value="C/Q=1-254"/>
</dbReference>
<dbReference type="PDB" id="4Y8S">
    <property type="method" value="X-ray"/>
    <property type="resolution" value="2.70 A"/>
    <property type="chains" value="C/Q=1-254"/>
</dbReference>
<dbReference type="PDB" id="4Y8T">
    <property type="method" value="X-ray"/>
    <property type="resolution" value="2.70 A"/>
    <property type="chains" value="C/Q=1-254"/>
</dbReference>
<dbReference type="PDB" id="4Y8U">
    <property type="method" value="X-ray"/>
    <property type="resolution" value="2.90 A"/>
    <property type="chains" value="C/Q=1-254"/>
</dbReference>
<dbReference type="PDB" id="4Y9Y">
    <property type="method" value="X-ray"/>
    <property type="resolution" value="2.80 A"/>
    <property type="chains" value="C/Q=1-254"/>
</dbReference>
<dbReference type="PDB" id="4Y9Z">
    <property type="method" value="X-ray"/>
    <property type="resolution" value="2.80 A"/>
    <property type="chains" value="C/Q=1-254"/>
</dbReference>
<dbReference type="PDB" id="4YA0">
    <property type="method" value="X-ray"/>
    <property type="resolution" value="2.80 A"/>
    <property type="chains" value="C/Q=1-254"/>
</dbReference>
<dbReference type="PDB" id="4YA1">
    <property type="method" value="X-ray"/>
    <property type="resolution" value="2.90 A"/>
    <property type="chains" value="C/Q=1-254"/>
</dbReference>
<dbReference type="PDB" id="4YA2">
    <property type="method" value="X-ray"/>
    <property type="resolution" value="2.70 A"/>
    <property type="chains" value="C/Q=1-254"/>
</dbReference>
<dbReference type="PDB" id="4YA3">
    <property type="method" value="X-ray"/>
    <property type="resolution" value="2.70 A"/>
    <property type="chains" value="C/Q=1-254"/>
</dbReference>
<dbReference type="PDB" id="4YA4">
    <property type="method" value="X-ray"/>
    <property type="resolution" value="2.90 A"/>
    <property type="chains" value="C/Q=1-254"/>
</dbReference>
<dbReference type="PDB" id="4YA5">
    <property type="method" value="X-ray"/>
    <property type="resolution" value="2.50 A"/>
    <property type="chains" value="C/Q=1-254"/>
</dbReference>
<dbReference type="PDB" id="4YA7">
    <property type="method" value="X-ray"/>
    <property type="resolution" value="2.70 A"/>
    <property type="chains" value="C/Q=1-254"/>
</dbReference>
<dbReference type="PDB" id="4YA9">
    <property type="method" value="X-ray"/>
    <property type="resolution" value="2.70 A"/>
    <property type="chains" value="C/Q=1-254"/>
</dbReference>
<dbReference type="PDB" id="4Z1L">
    <property type="method" value="X-ray"/>
    <property type="resolution" value="3.00 A"/>
    <property type="chains" value="C/Q=1-254"/>
</dbReference>
<dbReference type="PDB" id="5A5B">
    <property type="method" value="EM"/>
    <property type="resolution" value="9.50 A"/>
    <property type="chains" value="D=1-254"/>
</dbReference>
<dbReference type="PDB" id="5AHJ">
    <property type="method" value="X-ray"/>
    <property type="resolution" value="2.80 A"/>
    <property type="chains" value="C/Q=1-254"/>
</dbReference>
<dbReference type="PDB" id="5BOU">
    <property type="method" value="X-ray"/>
    <property type="resolution" value="2.60 A"/>
    <property type="chains" value="C/Q=1-254"/>
</dbReference>
<dbReference type="PDB" id="5BXL">
    <property type="method" value="X-ray"/>
    <property type="resolution" value="2.80 A"/>
    <property type="chains" value="C/Q=1-254"/>
</dbReference>
<dbReference type="PDB" id="5BXN">
    <property type="method" value="X-ray"/>
    <property type="resolution" value="2.80 A"/>
    <property type="chains" value="C/Q=1-254"/>
</dbReference>
<dbReference type="PDB" id="5CGF">
    <property type="method" value="X-ray"/>
    <property type="resolution" value="2.80 A"/>
    <property type="chains" value="C/Q=1-254"/>
</dbReference>
<dbReference type="PDB" id="5CGG">
    <property type="method" value="X-ray"/>
    <property type="resolution" value="2.90 A"/>
    <property type="chains" value="C/Q=1-254"/>
</dbReference>
<dbReference type="PDB" id="5CGH">
    <property type="method" value="X-ray"/>
    <property type="resolution" value="2.50 A"/>
    <property type="chains" value="C/Q=1-254"/>
</dbReference>
<dbReference type="PDB" id="5CGI">
    <property type="method" value="X-ray"/>
    <property type="resolution" value="2.80 A"/>
    <property type="chains" value="C/Q=1-254"/>
</dbReference>
<dbReference type="PDB" id="5CZ4">
    <property type="method" value="X-ray"/>
    <property type="resolution" value="2.30 A"/>
    <property type="chains" value="C/Q=1-254"/>
</dbReference>
<dbReference type="PDB" id="5CZ5">
    <property type="method" value="X-ray"/>
    <property type="resolution" value="2.80 A"/>
    <property type="chains" value="C/Q=1-254"/>
</dbReference>
<dbReference type="PDB" id="5CZ6">
    <property type="method" value="X-ray"/>
    <property type="resolution" value="2.70 A"/>
    <property type="chains" value="C/Q=1-254"/>
</dbReference>
<dbReference type="PDB" id="5CZ7">
    <property type="method" value="X-ray"/>
    <property type="resolution" value="2.50 A"/>
    <property type="chains" value="C/Q=1-254"/>
</dbReference>
<dbReference type="PDB" id="5CZ8">
    <property type="method" value="X-ray"/>
    <property type="resolution" value="2.80 A"/>
    <property type="chains" value="C/Q=1-254"/>
</dbReference>
<dbReference type="PDB" id="5CZ9">
    <property type="method" value="X-ray"/>
    <property type="resolution" value="2.90 A"/>
    <property type="chains" value="C/Q=1-254"/>
</dbReference>
<dbReference type="PDB" id="5CZA">
    <property type="method" value="X-ray"/>
    <property type="resolution" value="2.50 A"/>
    <property type="chains" value="C/Q=1-254"/>
</dbReference>
<dbReference type="PDB" id="5D0S">
    <property type="method" value="X-ray"/>
    <property type="resolution" value="2.50 A"/>
    <property type="chains" value="C/Q=1-254"/>
</dbReference>
<dbReference type="PDB" id="5D0T">
    <property type="method" value="X-ray"/>
    <property type="resolution" value="2.60 A"/>
    <property type="chains" value="C/Q=1-254"/>
</dbReference>
<dbReference type="PDB" id="5D0V">
    <property type="method" value="X-ray"/>
    <property type="resolution" value="2.90 A"/>
    <property type="chains" value="C/Q=1-254"/>
</dbReference>
<dbReference type="PDB" id="5D0W">
    <property type="method" value="X-ray"/>
    <property type="resolution" value="2.80 A"/>
    <property type="chains" value="C/Q=1-254"/>
</dbReference>
<dbReference type="PDB" id="5D0X">
    <property type="method" value="X-ray"/>
    <property type="resolution" value="2.60 A"/>
    <property type="chains" value="C/Q=1-254"/>
</dbReference>
<dbReference type="PDB" id="5D0Z">
    <property type="method" value="X-ray"/>
    <property type="resolution" value="2.90 A"/>
    <property type="chains" value="C/Q=1-254"/>
</dbReference>
<dbReference type="PDB" id="5DKI">
    <property type="method" value="X-ray"/>
    <property type="resolution" value="2.80 A"/>
    <property type="chains" value="C/Q=1-254"/>
</dbReference>
<dbReference type="PDB" id="5DKJ">
    <property type="method" value="X-ray"/>
    <property type="resolution" value="2.80 A"/>
    <property type="chains" value="C/Q=1-254"/>
</dbReference>
<dbReference type="PDB" id="5FG7">
    <property type="method" value="X-ray"/>
    <property type="resolution" value="2.70 A"/>
    <property type="chains" value="C/Q=1-254"/>
</dbReference>
<dbReference type="PDB" id="5FG9">
    <property type="method" value="X-ray"/>
    <property type="resolution" value="2.60 A"/>
    <property type="chains" value="C/Q=1-254"/>
</dbReference>
<dbReference type="PDB" id="5FGA">
    <property type="method" value="X-ray"/>
    <property type="resolution" value="2.70 A"/>
    <property type="chains" value="C/Q=1-254"/>
</dbReference>
<dbReference type="PDB" id="5FGD">
    <property type="method" value="X-ray"/>
    <property type="resolution" value="2.80 A"/>
    <property type="chains" value="C/Q=1-254"/>
</dbReference>
<dbReference type="PDB" id="5FGE">
    <property type="method" value="X-ray"/>
    <property type="resolution" value="2.60 A"/>
    <property type="chains" value="C/Q=1-254"/>
</dbReference>
<dbReference type="PDB" id="5FGF">
    <property type="method" value="X-ray"/>
    <property type="resolution" value="2.60 A"/>
    <property type="chains" value="C/Q=1-254"/>
</dbReference>
<dbReference type="PDB" id="5FGG">
    <property type="method" value="X-ray"/>
    <property type="resolution" value="2.70 A"/>
    <property type="chains" value="C/Q=1-254"/>
</dbReference>
<dbReference type="PDB" id="5FGH">
    <property type="method" value="X-ray"/>
    <property type="resolution" value="2.80 A"/>
    <property type="chains" value="C/Q=1-254"/>
</dbReference>
<dbReference type="PDB" id="5FGI">
    <property type="method" value="X-ray"/>
    <property type="resolution" value="2.90 A"/>
    <property type="chains" value="C/Q=1-254"/>
</dbReference>
<dbReference type="PDB" id="5FHS">
    <property type="method" value="X-ray"/>
    <property type="resolution" value="2.70 A"/>
    <property type="chains" value="C/Q=1-254"/>
</dbReference>
<dbReference type="PDB" id="5JHR">
    <property type="method" value="X-ray"/>
    <property type="resolution" value="2.90 A"/>
    <property type="chains" value="C/Q=1-254"/>
</dbReference>
<dbReference type="PDB" id="5JHS">
    <property type="method" value="X-ray"/>
    <property type="resolution" value="3.00 A"/>
    <property type="chains" value="C/Q=1-254"/>
</dbReference>
<dbReference type="PDB" id="5L52">
    <property type="method" value="X-ray"/>
    <property type="resolution" value="2.70 A"/>
    <property type="chains" value="C/Q=1-254"/>
</dbReference>
<dbReference type="PDB" id="5L54">
    <property type="method" value="X-ray"/>
    <property type="resolution" value="2.80 A"/>
    <property type="chains" value="C/Q=1-254"/>
</dbReference>
<dbReference type="PDB" id="5L55">
    <property type="method" value="X-ray"/>
    <property type="resolution" value="2.90 A"/>
    <property type="chains" value="C/Q=1-254"/>
</dbReference>
<dbReference type="PDB" id="5L5A">
    <property type="method" value="X-ray"/>
    <property type="resolution" value="2.40 A"/>
    <property type="chains" value="C/Q=1-254"/>
</dbReference>
<dbReference type="PDB" id="5L5B">
    <property type="method" value="X-ray"/>
    <property type="resolution" value="2.80 A"/>
    <property type="chains" value="C/Q=1-254"/>
</dbReference>
<dbReference type="PDB" id="5L5D">
    <property type="method" value="X-ray"/>
    <property type="resolution" value="2.80 A"/>
    <property type="chains" value="C/Q=1-254"/>
</dbReference>
<dbReference type="PDB" id="5L5E">
    <property type="method" value="X-ray"/>
    <property type="resolution" value="2.90 A"/>
    <property type="chains" value="C/Q=1-254"/>
</dbReference>
<dbReference type="PDB" id="5L5F">
    <property type="method" value="X-ray"/>
    <property type="resolution" value="2.50 A"/>
    <property type="chains" value="C/Q=1-254"/>
</dbReference>
<dbReference type="PDB" id="5L5H">
    <property type="method" value="X-ray"/>
    <property type="resolution" value="2.60 A"/>
    <property type="chains" value="C/Q=1-254"/>
</dbReference>
<dbReference type="PDB" id="5L5I">
    <property type="method" value="X-ray"/>
    <property type="resolution" value="2.90 A"/>
    <property type="chains" value="C/Q=1-254"/>
</dbReference>
<dbReference type="PDB" id="5L5J">
    <property type="method" value="X-ray"/>
    <property type="resolution" value="2.90 A"/>
    <property type="chains" value="C/Q=1-254"/>
</dbReference>
<dbReference type="PDB" id="5L5O">
    <property type="method" value="X-ray"/>
    <property type="resolution" value="2.60 A"/>
    <property type="chains" value="C/Q=1-254"/>
</dbReference>
<dbReference type="PDB" id="5L5P">
    <property type="method" value="X-ray"/>
    <property type="resolution" value="2.80 A"/>
    <property type="chains" value="C/Q=1-254"/>
</dbReference>
<dbReference type="PDB" id="5L5Q">
    <property type="method" value="X-ray"/>
    <property type="resolution" value="2.80 A"/>
    <property type="chains" value="C/Q=1-254"/>
</dbReference>
<dbReference type="PDB" id="5L5R">
    <property type="method" value="X-ray"/>
    <property type="resolution" value="2.90 A"/>
    <property type="chains" value="C/Q=1-254"/>
</dbReference>
<dbReference type="PDB" id="5L5S">
    <property type="method" value="X-ray"/>
    <property type="resolution" value="2.60 A"/>
    <property type="chains" value="C/Q=1-254"/>
</dbReference>
<dbReference type="PDB" id="5L5T">
    <property type="method" value="X-ray"/>
    <property type="resolution" value="2.90 A"/>
    <property type="chains" value="C/Q=1-254"/>
</dbReference>
<dbReference type="PDB" id="5L5U">
    <property type="method" value="X-ray"/>
    <property type="resolution" value="2.60 A"/>
    <property type="chains" value="C/Q=1-254"/>
</dbReference>
<dbReference type="PDB" id="5L5V">
    <property type="method" value="X-ray"/>
    <property type="resolution" value="2.70 A"/>
    <property type="chains" value="C/Q=1-254"/>
</dbReference>
<dbReference type="PDB" id="5L5W">
    <property type="method" value="X-ray"/>
    <property type="resolution" value="2.80 A"/>
    <property type="chains" value="C/Q=1-254"/>
</dbReference>
<dbReference type="PDB" id="5L5X">
    <property type="method" value="X-ray"/>
    <property type="resolution" value="2.90 A"/>
    <property type="chains" value="C/Q=1-254"/>
</dbReference>
<dbReference type="PDB" id="5L5Y">
    <property type="method" value="X-ray"/>
    <property type="resolution" value="2.70 A"/>
    <property type="chains" value="C/Q=1-254"/>
</dbReference>
<dbReference type="PDB" id="5L5Z">
    <property type="method" value="X-ray"/>
    <property type="resolution" value="2.70 A"/>
    <property type="chains" value="C/Q=1-254"/>
</dbReference>
<dbReference type="PDB" id="5L60">
    <property type="method" value="X-ray"/>
    <property type="resolution" value="2.70 A"/>
    <property type="chains" value="C/Q=1-254"/>
</dbReference>
<dbReference type="PDB" id="5L61">
    <property type="method" value="X-ray"/>
    <property type="resolution" value="2.80 A"/>
    <property type="chains" value="C/Q=1-254"/>
</dbReference>
<dbReference type="PDB" id="5L62">
    <property type="method" value="X-ray"/>
    <property type="resolution" value="2.80 A"/>
    <property type="chains" value="C/Q=1-254"/>
</dbReference>
<dbReference type="PDB" id="5L63">
    <property type="method" value="X-ray"/>
    <property type="resolution" value="2.70 A"/>
    <property type="chains" value="C/Q=1-254"/>
</dbReference>
<dbReference type="PDB" id="5L64">
    <property type="method" value="X-ray"/>
    <property type="resolution" value="2.70 A"/>
    <property type="chains" value="C/Q=1-254"/>
</dbReference>
<dbReference type="PDB" id="5L65">
    <property type="method" value="X-ray"/>
    <property type="resolution" value="2.90 A"/>
    <property type="chains" value="C/Q=1-254"/>
</dbReference>
<dbReference type="PDB" id="5L66">
    <property type="method" value="X-ray"/>
    <property type="resolution" value="2.80 A"/>
    <property type="chains" value="C/Q=1-254"/>
</dbReference>
<dbReference type="PDB" id="5L67">
    <property type="method" value="X-ray"/>
    <property type="resolution" value="2.60 A"/>
    <property type="chains" value="C/Q=1-254"/>
</dbReference>
<dbReference type="PDB" id="5L68">
    <property type="method" value="X-ray"/>
    <property type="resolution" value="2.80 A"/>
    <property type="chains" value="C/Q=1-254"/>
</dbReference>
<dbReference type="PDB" id="5L69">
    <property type="method" value="X-ray"/>
    <property type="resolution" value="2.70 A"/>
    <property type="chains" value="C/Q=1-254"/>
</dbReference>
<dbReference type="PDB" id="5L6A">
    <property type="method" value="X-ray"/>
    <property type="resolution" value="2.80 A"/>
    <property type="chains" value="C/Q=1-254"/>
</dbReference>
<dbReference type="PDB" id="5L6B">
    <property type="method" value="X-ray"/>
    <property type="resolution" value="2.60 A"/>
    <property type="chains" value="C/Q=1-254"/>
</dbReference>
<dbReference type="PDB" id="5L6C">
    <property type="method" value="X-ray"/>
    <property type="resolution" value="2.60 A"/>
    <property type="chains" value="C/Q=1-254"/>
</dbReference>
<dbReference type="PDB" id="5LAI">
    <property type="method" value="X-ray"/>
    <property type="resolution" value="2.50 A"/>
    <property type="chains" value="C/Q=1-254"/>
</dbReference>
<dbReference type="PDB" id="5LAJ">
    <property type="method" value="X-ray"/>
    <property type="resolution" value="2.90 A"/>
    <property type="chains" value="C/Q=1-254"/>
</dbReference>
<dbReference type="PDB" id="5LTT">
    <property type="method" value="X-ray"/>
    <property type="resolution" value="2.70 A"/>
    <property type="chains" value="C/Q=1-254"/>
</dbReference>
<dbReference type="PDB" id="5M2B">
    <property type="method" value="X-ray"/>
    <property type="resolution" value="2.70 A"/>
    <property type="chains" value="C/Q=1-254"/>
</dbReference>
<dbReference type="PDB" id="5MP9">
    <property type="method" value="EM"/>
    <property type="resolution" value="4.10 A"/>
    <property type="chains" value="D/d=1-254"/>
</dbReference>
<dbReference type="PDB" id="5MPA">
    <property type="method" value="EM"/>
    <property type="resolution" value="4.50 A"/>
    <property type="chains" value="D/d=1-254"/>
</dbReference>
<dbReference type="PDB" id="5MPB">
    <property type="method" value="EM"/>
    <property type="resolution" value="7.80 A"/>
    <property type="chains" value="D/d=1-254"/>
</dbReference>
<dbReference type="PDB" id="5MPC">
    <property type="method" value="EM"/>
    <property type="resolution" value="7.70 A"/>
    <property type="chains" value="D/d=1-254"/>
</dbReference>
<dbReference type="PDB" id="5NIF">
    <property type="method" value="X-ray"/>
    <property type="resolution" value="3.00 A"/>
    <property type="chains" value="D/R=1-254"/>
</dbReference>
<dbReference type="PDB" id="5WVI">
    <property type="method" value="EM"/>
    <property type="resolution" value="6.30 A"/>
    <property type="chains" value="D/n=1-254"/>
</dbReference>
<dbReference type="PDB" id="5WVK">
    <property type="method" value="EM"/>
    <property type="resolution" value="4.20 A"/>
    <property type="chains" value="D/n=1-254"/>
</dbReference>
<dbReference type="PDB" id="6EF0">
    <property type="method" value="EM"/>
    <property type="resolution" value="4.43 A"/>
    <property type="chains" value="D=1-242"/>
</dbReference>
<dbReference type="PDB" id="6EF1">
    <property type="method" value="EM"/>
    <property type="resolution" value="4.73 A"/>
    <property type="chains" value="D=9-242"/>
</dbReference>
<dbReference type="PDB" id="6EF2">
    <property type="method" value="EM"/>
    <property type="resolution" value="4.27 A"/>
    <property type="chains" value="D=2-242"/>
</dbReference>
<dbReference type="PDB" id="6EF3">
    <property type="method" value="EM"/>
    <property type="resolution" value="4.17 A"/>
    <property type="chains" value="D=1-254"/>
</dbReference>
<dbReference type="PDB" id="6FVT">
    <property type="method" value="EM"/>
    <property type="resolution" value="4.10 A"/>
    <property type="chains" value="D/d=4-254"/>
</dbReference>
<dbReference type="PDB" id="6FVU">
    <property type="method" value="EM"/>
    <property type="resolution" value="4.50 A"/>
    <property type="chains" value="D/d=4-254"/>
</dbReference>
<dbReference type="PDB" id="6FVV">
    <property type="method" value="EM"/>
    <property type="resolution" value="5.40 A"/>
    <property type="chains" value="D/d=4-254"/>
</dbReference>
<dbReference type="PDB" id="6FVW">
    <property type="method" value="EM"/>
    <property type="resolution" value="4.50 A"/>
    <property type="chains" value="D/d=3-254"/>
</dbReference>
<dbReference type="PDB" id="6FVX">
    <property type="method" value="EM"/>
    <property type="resolution" value="4.90 A"/>
    <property type="chains" value="D/d=3-254"/>
</dbReference>
<dbReference type="PDB" id="6FVY">
    <property type="method" value="EM"/>
    <property type="resolution" value="6.10 A"/>
    <property type="chains" value="D/d=3-254"/>
</dbReference>
<dbReference type="PDB" id="6G7F">
    <property type="method" value="X-ray"/>
    <property type="resolution" value="2.70 A"/>
    <property type="chains" value="C/Q=1-254"/>
</dbReference>
<dbReference type="PDB" id="6G8M">
    <property type="method" value="X-ray"/>
    <property type="resolution" value="2.70 A"/>
    <property type="chains" value="C/Q=1-254"/>
</dbReference>
<dbReference type="PDB" id="6G8N">
    <property type="method" value="X-ray"/>
    <property type="resolution" value="3.00 A"/>
    <property type="chains" value="C/Q=1-254"/>
</dbReference>
<dbReference type="PDB" id="6GOP">
    <property type="method" value="X-ray"/>
    <property type="resolution" value="2.90 A"/>
    <property type="chains" value="C/Q=1-254"/>
</dbReference>
<dbReference type="PDB" id="6H39">
    <property type="method" value="X-ray"/>
    <property type="resolution" value="2.50 A"/>
    <property type="chains" value="C/Q=1-254"/>
</dbReference>
<dbReference type="PDB" id="6HTB">
    <property type="method" value="X-ray"/>
    <property type="resolution" value="2.70 A"/>
    <property type="chains" value="C/Q=1-254"/>
</dbReference>
<dbReference type="PDB" id="6HTC">
    <property type="method" value="X-ray"/>
    <property type="resolution" value="2.80 A"/>
    <property type="chains" value="C/Q=1-254"/>
</dbReference>
<dbReference type="PDB" id="6HTD">
    <property type="method" value="X-ray"/>
    <property type="resolution" value="3.00 A"/>
    <property type="chains" value="C/Q=1-254"/>
</dbReference>
<dbReference type="PDB" id="6HTP">
    <property type="method" value="X-ray"/>
    <property type="resolution" value="3.00 A"/>
    <property type="chains" value="C/Q=1-254"/>
</dbReference>
<dbReference type="PDB" id="6HTR">
    <property type="method" value="X-ray"/>
    <property type="resolution" value="2.60 A"/>
    <property type="chains" value="C/Q=1-254"/>
</dbReference>
<dbReference type="PDB" id="6HUB">
    <property type="method" value="X-ray"/>
    <property type="resolution" value="2.90 A"/>
    <property type="chains" value="C/Q=1-254"/>
</dbReference>
<dbReference type="PDB" id="6HUC">
    <property type="method" value="X-ray"/>
    <property type="resolution" value="3.00 A"/>
    <property type="chains" value="C/Q=1-254"/>
</dbReference>
<dbReference type="PDB" id="6HUQ">
    <property type="method" value="X-ray"/>
    <property type="resolution" value="3.00 A"/>
    <property type="chains" value="C/Q=1-254"/>
</dbReference>
<dbReference type="PDB" id="6HUU">
    <property type="method" value="X-ray"/>
    <property type="resolution" value="2.80 A"/>
    <property type="chains" value="C/Q=1-254"/>
</dbReference>
<dbReference type="PDB" id="6HUV">
    <property type="method" value="X-ray"/>
    <property type="resolution" value="3.10 A"/>
    <property type="chains" value="C/Q=1-254"/>
</dbReference>
<dbReference type="PDB" id="6HV3">
    <property type="method" value="X-ray"/>
    <property type="resolution" value="2.70 A"/>
    <property type="chains" value="C/Q=1-254"/>
</dbReference>
<dbReference type="PDB" id="6HV4">
    <property type="method" value="X-ray"/>
    <property type="resolution" value="3.00 A"/>
    <property type="chains" value="C/Q=1-254"/>
</dbReference>
<dbReference type="PDB" id="6HV5">
    <property type="method" value="X-ray"/>
    <property type="resolution" value="3.00 A"/>
    <property type="chains" value="C/Q=1-254"/>
</dbReference>
<dbReference type="PDB" id="6HV7">
    <property type="method" value="X-ray"/>
    <property type="resolution" value="3.40 A"/>
    <property type="chains" value="C/Q=1-254"/>
</dbReference>
<dbReference type="PDB" id="6HVA">
    <property type="method" value="X-ray"/>
    <property type="resolution" value="2.90 A"/>
    <property type="chains" value="C/Q=1-254"/>
</dbReference>
<dbReference type="PDB" id="6HVR">
    <property type="method" value="X-ray"/>
    <property type="resolution" value="2.70 A"/>
    <property type="chains" value="C/Q=1-254"/>
</dbReference>
<dbReference type="PDB" id="6HVS">
    <property type="method" value="X-ray"/>
    <property type="resolution" value="3.10 A"/>
    <property type="chains" value="C/Q=1-254"/>
</dbReference>
<dbReference type="PDB" id="6HVT">
    <property type="method" value="X-ray"/>
    <property type="resolution" value="2.90 A"/>
    <property type="chains" value="C/Q=1-254"/>
</dbReference>
<dbReference type="PDB" id="6HVU">
    <property type="method" value="X-ray"/>
    <property type="resolution" value="2.90 A"/>
    <property type="chains" value="C/Q=1-254"/>
</dbReference>
<dbReference type="PDB" id="6HVV">
    <property type="method" value="X-ray"/>
    <property type="resolution" value="2.70 A"/>
    <property type="chains" value="C/Q=1-254"/>
</dbReference>
<dbReference type="PDB" id="6HVW">
    <property type="method" value="X-ray"/>
    <property type="resolution" value="3.00 A"/>
    <property type="chains" value="C/Q=1-254"/>
</dbReference>
<dbReference type="PDB" id="6HVX">
    <property type="method" value="X-ray"/>
    <property type="resolution" value="2.80 A"/>
    <property type="chains" value="C/Q=1-254"/>
</dbReference>
<dbReference type="PDB" id="6HVY">
    <property type="method" value="X-ray"/>
    <property type="resolution" value="2.70 A"/>
    <property type="chains" value="C/Q=1-254"/>
</dbReference>
<dbReference type="PDB" id="6HW0">
    <property type="method" value="X-ray"/>
    <property type="resolution" value="2.80 A"/>
    <property type="chains" value="C/Q=1-254"/>
</dbReference>
<dbReference type="PDB" id="6HW3">
    <property type="method" value="X-ray"/>
    <property type="resolution" value="2.60 A"/>
    <property type="chains" value="C/Q=1-254"/>
</dbReference>
<dbReference type="PDB" id="6HW4">
    <property type="method" value="X-ray"/>
    <property type="resolution" value="2.90 A"/>
    <property type="chains" value="C/Q=1-254"/>
</dbReference>
<dbReference type="PDB" id="6HW5">
    <property type="method" value="X-ray"/>
    <property type="resolution" value="2.90 A"/>
    <property type="chains" value="C/Q=1-254"/>
</dbReference>
<dbReference type="PDB" id="6HW6">
    <property type="method" value="X-ray"/>
    <property type="resolution" value="2.70 A"/>
    <property type="chains" value="C/Q=1-254"/>
</dbReference>
<dbReference type="PDB" id="6HW7">
    <property type="method" value="X-ray"/>
    <property type="resolution" value="2.70 A"/>
    <property type="chains" value="C/Q=1-254"/>
</dbReference>
<dbReference type="PDB" id="6HW8">
    <property type="method" value="X-ray"/>
    <property type="resolution" value="2.80 A"/>
    <property type="chains" value="C/Q=1-254"/>
</dbReference>
<dbReference type="PDB" id="6HW9">
    <property type="method" value="X-ray"/>
    <property type="resolution" value="2.80 A"/>
    <property type="chains" value="C/Q=1-254"/>
</dbReference>
<dbReference type="PDB" id="6HWA">
    <property type="method" value="X-ray"/>
    <property type="resolution" value="2.80 A"/>
    <property type="chains" value="C/Q=1-254"/>
</dbReference>
<dbReference type="PDB" id="6HWB">
    <property type="method" value="X-ray"/>
    <property type="resolution" value="2.60 A"/>
    <property type="chains" value="C/Q=1-254"/>
</dbReference>
<dbReference type="PDB" id="6HWC">
    <property type="method" value="X-ray"/>
    <property type="resolution" value="2.80 A"/>
    <property type="chains" value="C/Q=1-254"/>
</dbReference>
<dbReference type="PDB" id="6HWD">
    <property type="method" value="X-ray"/>
    <property type="resolution" value="2.80 A"/>
    <property type="chains" value="C/Q=1-254"/>
</dbReference>
<dbReference type="PDB" id="6HWE">
    <property type="method" value="X-ray"/>
    <property type="resolution" value="2.30 A"/>
    <property type="chains" value="C/Q=1-254"/>
</dbReference>
<dbReference type="PDB" id="6HWF">
    <property type="method" value="X-ray"/>
    <property type="resolution" value="2.50 A"/>
    <property type="chains" value="C/Q=1-254"/>
</dbReference>
<dbReference type="PDB" id="6J2C">
    <property type="method" value="EM"/>
    <property type="resolution" value="7.00 A"/>
    <property type="chains" value="D/n=1-254"/>
</dbReference>
<dbReference type="PDB" id="6J2N">
    <property type="method" value="EM"/>
    <property type="resolution" value="7.50 A"/>
    <property type="chains" value="D/n=1-254"/>
</dbReference>
<dbReference type="PDB" id="6J2Q">
    <property type="method" value="EM"/>
    <property type="resolution" value="3.80 A"/>
    <property type="chains" value="D/n=1-254"/>
</dbReference>
<dbReference type="PDB" id="6J2X">
    <property type="method" value="EM"/>
    <property type="resolution" value="3.80 A"/>
    <property type="chains" value="D/n=1-254"/>
</dbReference>
<dbReference type="PDB" id="6J30">
    <property type="method" value="EM"/>
    <property type="resolution" value="4.50 A"/>
    <property type="chains" value="D/n=1-254"/>
</dbReference>
<dbReference type="PDB" id="6ZOU">
    <property type="method" value="X-ray"/>
    <property type="resolution" value="2.90 A"/>
    <property type="chains" value="C/Q=1-254"/>
</dbReference>
<dbReference type="PDB" id="6ZP6">
    <property type="method" value="X-ray"/>
    <property type="resolution" value="2.80 A"/>
    <property type="chains" value="C/Q=1-254"/>
</dbReference>
<dbReference type="PDB" id="6ZP8">
    <property type="method" value="X-ray"/>
    <property type="resolution" value="3.00 A"/>
    <property type="chains" value="C/Q=1-254"/>
</dbReference>
<dbReference type="PDB" id="7LS5">
    <property type="method" value="EM"/>
    <property type="resolution" value="2.74 A"/>
    <property type="chains" value="D/R=1-254"/>
</dbReference>
<dbReference type="PDB" id="7LS6">
    <property type="method" value="EM"/>
    <property type="resolution" value="3.17 A"/>
    <property type="chains" value="D=1-254"/>
</dbReference>
<dbReference type="PDB" id="7LSX">
    <property type="method" value="EM"/>
    <property type="resolution" value="3.61 A"/>
    <property type="chains" value="D=1-254"/>
</dbReference>
<dbReference type="PDB" id="7O2L">
    <property type="method" value="X-ray"/>
    <property type="resolution" value="3.00 A"/>
    <property type="chains" value="C/Q=1-254"/>
</dbReference>
<dbReference type="PDB" id="7QO3">
    <property type="method" value="EM"/>
    <property type="resolution" value="6.10 A"/>
    <property type="chains" value="D/d=1-254"/>
</dbReference>
<dbReference type="PDB" id="7QO5">
    <property type="method" value="EM"/>
    <property type="resolution" value="6.00 A"/>
    <property type="chains" value="D/d=1-254"/>
</dbReference>
<dbReference type="PDB" id="7TEJ">
    <property type="method" value="EM"/>
    <property type="resolution" value="2.74 A"/>
    <property type="chains" value="C/D/Q/R=1-254"/>
</dbReference>
<dbReference type="PDB" id="7TEO">
    <property type="method" value="EM"/>
    <property type="resolution" value="2.97 A"/>
    <property type="chains" value="C/D/Q/R=1-254"/>
</dbReference>
<dbReference type="PDB" id="8BW1">
    <property type="method" value="X-ray"/>
    <property type="resolution" value="3.25 A"/>
    <property type="chains" value="C/Q=1-254"/>
</dbReference>
<dbReference type="PDB" id="8OHZ">
    <property type="method" value="X-ray"/>
    <property type="resolution" value="2.65 A"/>
    <property type="chains" value="C/Q=1-254"/>
</dbReference>
<dbReference type="PDB" id="8OI1">
    <property type="method" value="X-ray"/>
    <property type="resolution" value="2.95 A"/>
    <property type="chains" value="C/Q=1-254"/>
</dbReference>
<dbReference type="PDB" id="8OLR">
    <property type="method" value="X-ray"/>
    <property type="resolution" value="2.80 A"/>
    <property type="chains" value="C/Q=1-254"/>
</dbReference>
<dbReference type="PDB" id="8RHJ">
    <property type="method" value="X-ray"/>
    <property type="resolution" value="3.05 A"/>
    <property type="chains" value="C/Q=1-254"/>
</dbReference>
<dbReference type="PDB" id="8RHK">
    <property type="method" value="X-ray"/>
    <property type="resolution" value="2.80 A"/>
    <property type="chains" value="C/Q=1-254"/>
</dbReference>
<dbReference type="PDB" id="8RHL">
    <property type="method" value="X-ray"/>
    <property type="resolution" value="3.20 A"/>
    <property type="chains" value="C/Q=1-254"/>
</dbReference>
<dbReference type="PDB" id="8RVL">
    <property type="method" value="EM"/>
    <property type="resolution" value="2.14 A"/>
    <property type="chains" value="D/R=1-254"/>
</dbReference>
<dbReference type="PDB" id="8RVO">
    <property type="method" value="EM"/>
    <property type="resolution" value="2.69 A"/>
    <property type="chains" value="D/R=1-254"/>
</dbReference>
<dbReference type="PDB" id="8RVP">
    <property type="method" value="EM"/>
    <property type="resolution" value="2.28 A"/>
    <property type="chains" value="D/R=1-254"/>
</dbReference>
<dbReference type="PDB" id="8RVQ">
    <property type="method" value="EM"/>
    <property type="resolution" value="2.02 A"/>
    <property type="chains" value="D/R=1-254"/>
</dbReference>
<dbReference type="PDB" id="8T08">
    <property type="method" value="EM"/>
    <property type="resolution" value="3.00 A"/>
    <property type="chains" value="D/U=1-254"/>
</dbReference>
<dbReference type="PDB" id="8T0M">
    <property type="method" value="EM"/>
    <property type="resolution" value="2.40 A"/>
    <property type="chains" value="D/R=1-254"/>
</dbReference>
<dbReference type="PDB" id="8U6Y">
    <property type="method" value="EM"/>
    <property type="resolution" value="2.80 A"/>
    <property type="chains" value="D/U=1-254"/>
</dbReference>
<dbReference type="PDB" id="8U7U">
    <property type="method" value="EM"/>
    <property type="resolution" value="2.16 A"/>
    <property type="chains" value="D/R=1-254"/>
</dbReference>
<dbReference type="PDB" id="9D0T">
    <property type="method" value="EM"/>
    <property type="resolution" value="2.84 A"/>
    <property type="chains" value="D=1-254"/>
</dbReference>
<dbReference type="PDB" id="9EY9">
    <property type="method" value="X-ray"/>
    <property type="resolution" value="3.10 A"/>
    <property type="chains" value="C/Q=1-254"/>
</dbReference>
<dbReference type="PDB" id="9FST">
    <property type="method" value="X-ray"/>
    <property type="resolution" value="2.75 A"/>
    <property type="chains" value="C/Q=1-254"/>
</dbReference>
<dbReference type="PDB" id="9FSV">
    <property type="method" value="X-ray"/>
    <property type="resolution" value="2.75 A"/>
    <property type="chains" value="C/Q=1-254"/>
</dbReference>
<dbReference type="PDB" id="9FT0">
    <property type="method" value="X-ray"/>
    <property type="resolution" value="2.75 A"/>
    <property type="chains" value="C/Q=1-254"/>
</dbReference>
<dbReference type="PDB" id="9FT1">
    <property type="method" value="X-ray"/>
    <property type="resolution" value="2.60 A"/>
    <property type="chains" value="C/Q=1-254"/>
</dbReference>
<dbReference type="PDB" id="9GBK">
    <property type="method" value="EM"/>
    <property type="resolution" value="2.39 A"/>
    <property type="chains" value="D/R=1-254"/>
</dbReference>
<dbReference type="PDBsum" id="1FNT"/>
<dbReference type="PDBsum" id="1G0U"/>
<dbReference type="PDBsum" id="1G65"/>
<dbReference type="PDBsum" id="1JD2"/>
<dbReference type="PDBsum" id="1RYP"/>
<dbReference type="PDBsum" id="1Z7Q"/>
<dbReference type="PDBsum" id="2F16"/>
<dbReference type="PDBsum" id="2FAK"/>
<dbReference type="PDBsum" id="2GPL"/>
<dbReference type="PDBsum" id="2ZCY"/>
<dbReference type="PDBsum" id="3BDM"/>
<dbReference type="PDBsum" id="3D29"/>
<dbReference type="PDBsum" id="3DY3"/>
<dbReference type="PDBsum" id="3DY4"/>
<dbReference type="PDBsum" id="3E47"/>
<dbReference type="PDBsum" id="3GPJ"/>
<dbReference type="PDBsum" id="3GPT"/>
<dbReference type="PDBsum" id="3GPW"/>
<dbReference type="PDBsum" id="3HYE"/>
<dbReference type="PDBsum" id="3JCO"/>
<dbReference type="PDBsum" id="3JCP"/>
<dbReference type="PDBsum" id="3MG0"/>
<dbReference type="PDBsum" id="3MG4"/>
<dbReference type="PDBsum" id="3MG6"/>
<dbReference type="PDBsum" id="3MG7"/>
<dbReference type="PDBsum" id="3MG8"/>
<dbReference type="PDBsum" id="3NZJ"/>
<dbReference type="PDBsum" id="3NZW"/>
<dbReference type="PDBsum" id="3NZX"/>
<dbReference type="PDBsum" id="3OEU"/>
<dbReference type="PDBsum" id="3OEV"/>
<dbReference type="PDBsum" id="3OKJ"/>
<dbReference type="PDBsum" id="3SDI"/>
<dbReference type="PDBsum" id="3SDK"/>
<dbReference type="PDBsum" id="3SHJ"/>
<dbReference type="PDBsum" id="3TDD"/>
<dbReference type="PDBsum" id="3UN4"/>
<dbReference type="PDBsum" id="3UN8"/>
<dbReference type="PDBsum" id="3WXR"/>
<dbReference type="PDBsum" id="4CR2"/>
<dbReference type="PDBsum" id="4CR3"/>
<dbReference type="PDBsum" id="4CR4"/>
<dbReference type="PDBsum" id="4EU2"/>
<dbReference type="PDBsum" id="4FZC"/>
<dbReference type="PDBsum" id="4FZG"/>
<dbReference type="PDBsum" id="4G4S"/>
<dbReference type="PDBsum" id="4GK7"/>
<dbReference type="PDBsum" id="4HNP"/>
<dbReference type="PDBsum" id="4HRC"/>
<dbReference type="PDBsum" id="4HRD"/>
<dbReference type="PDBsum" id="4INR"/>
<dbReference type="PDBsum" id="4INT"/>
<dbReference type="PDBsum" id="4INU"/>
<dbReference type="PDBsum" id="4J70"/>
<dbReference type="PDBsum" id="4JSQ"/>
<dbReference type="PDBsum" id="4JSU"/>
<dbReference type="PDBsum" id="4JT0"/>
<dbReference type="PDBsum" id="4LQI"/>
<dbReference type="PDBsum" id="4LTC"/>
<dbReference type="PDBsum" id="4NNN"/>
<dbReference type="PDBsum" id="4NNW"/>
<dbReference type="PDBsum" id="4NO1"/>
<dbReference type="PDBsum" id="4NO6"/>
<dbReference type="PDBsum" id="4NO8"/>
<dbReference type="PDBsum" id="4NO9"/>
<dbReference type="PDBsum" id="4Q1S"/>
<dbReference type="PDBsum" id="4QBY"/>
<dbReference type="PDBsum" id="4QLQ"/>
<dbReference type="PDBsum" id="4QLS"/>
<dbReference type="PDBsum" id="4QLT"/>
<dbReference type="PDBsum" id="4QLU"/>
<dbReference type="PDBsum" id="4QLV"/>
<dbReference type="PDBsum" id="4QUX"/>
<dbReference type="PDBsum" id="4QUY"/>
<dbReference type="PDBsum" id="4QV0"/>
<dbReference type="PDBsum" id="4QV1"/>
<dbReference type="PDBsum" id="4QV3"/>
<dbReference type="PDBsum" id="4QV4"/>
<dbReference type="PDBsum" id="4QV5"/>
<dbReference type="PDBsum" id="4QV6"/>
<dbReference type="PDBsum" id="4QV7"/>
<dbReference type="PDBsum" id="4QV8"/>
<dbReference type="PDBsum" id="4QV9"/>
<dbReference type="PDBsum" id="4QVL"/>
<dbReference type="PDBsum" id="4QVM"/>
<dbReference type="PDBsum" id="4QVN"/>
<dbReference type="PDBsum" id="4QVP"/>
<dbReference type="PDBsum" id="4QVQ"/>
<dbReference type="PDBsum" id="4QVV"/>
<dbReference type="PDBsum" id="4QVW"/>
<dbReference type="PDBsum" id="4QVY"/>
<dbReference type="PDBsum" id="4QW0"/>
<dbReference type="PDBsum" id="4QW1"/>
<dbReference type="PDBsum" id="4QW3"/>
<dbReference type="PDBsum" id="4QW4"/>
<dbReference type="PDBsum" id="4QW5"/>
<dbReference type="PDBsum" id="4QW6"/>
<dbReference type="PDBsum" id="4QW7"/>
<dbReference type="PDBsum" id="4QWF"/>
<dbReference type="PDBsum" id="4QWG"/>
<dbReference type="PDBsum" id="4QWI"/>
<dbReference type="PDBsum" id="4QWJ"/>
<dbReference type="PDBsum" id="4QWK"/>
<dbReference type="PDBsum" id="4QWL"/>
<dbReference type="PDBsum" id="4QWR"/>
<dbReference type="PDBsum" id="4QWS"/>
<dbReference type="PDBsum" id="4QWU"/>
<dbReference type="PDBsum" id="4QWX"/>
<dbReference type="PDBsum" id="4QXJ"/>
<dbReference type="PDBsum" id="4QZ0"/>
<dbReference type="PDBsum" id="4QZ1"/>
<dbReference type="PDBsum" id="4QZ2"/>
<dbReference type="PDBsum" id="4QZ3"/>
<dbReference type="PDBsum" id="4QZ4"/>
<dbReference type="PDBsum" id="4QZ5"/>
<dbReference type="PDBsum" id="4QZ6"/>
<dbReference type="PDBsum" id="4QZ7"/>
<dbReference type="PDBsum" id="4QZW"/>
<dbReference type="PDBsum" id="4QZX"/>
<dbReference type="PDBsum" id="4QZZ"/>
<dbReference type="PDBsum" id="4R00"/>
<dbReference type="PDBsum" id="4R02"/>
<dbReference type="PDBsum" id="4R17"/>
<dbReference type="PDBsum" id="4R18"/>
<dbReference type="PDBsum" id="4RUR"/>
<dbReference type="PDBsum" id="4V7O"/>
<dbReference type="PDBsum" id="4X6Z"/>
<dbReference type="PDBsum" id="4Y69"/>
<dbReference type="PDBsum" id="4Y6A"/>
<dbReference type="PDBsum" id="4Y6V"/>
<dbReference type="PDBsum" id="4Y6Z"/>
<dbReference type="PDBsum" id="4Y70"/>
<dbReference type="PDBsum" id="4Y74"/>
<dbReference type="PDBsum" id="4Y75"/>
<dbReference type="PDBsum" id="4Y77"/>
<dbReference type="PDBsum" id="4Y78"/>
<dbReference type="PDBsum" id="4Y7W"/>
<dbReference type="PDBsum" id="4Y7X"/>
<dbReference type="PDBsum" id="4Y7Y"/>
<dbReference type="PDBsum" id="4Y80"/>
<dbReference type="PDBsum" id="4Y81"/>
<dbReference type="PDBsum" id="4Y82"/>
<dbReference type="PDBsum" id="4Y84"/>
<dbReference type="PDBsum" id="4Y8G"/>
<dbReference type="PDBsum" id="4Y8H"/>
<dbReference type="PDBsum" id="4Y8I"/>
<dbReference type="PDBsum" id="4Y8J"/>
<dbReference type="PDBsum" id="4Y8K"/>
<dbReference type="PDBsum" id="4Y8L"/>
<dbReference type="PDBsum" id="4Y8M"/>
<dbReference type="PDBsum" id="4Y8N"/>
<dbReference type="PDBsum" id="4Y8O"/>
<dbReference type="PDBsum" id="4Y8P"/>
<dbReference type="PDBsum" id="4Y8Q"/>
<dbReference type="PDBsum" id="4Y8R"/>
<dbReference type="PDBsum" id="4Y8S"/>
<dbReference type="PDBsum" id="4Y8T"/>
<dbReference type="PDBsum" id="4Y8U"/>
<dbReference type="PDBsum" id="4Y9Y"/>
<dbReference type="PDBsum" id="4Y9Z"/>
<dbReference type="PDBsum" id="4YA0"/>
<dbReference type="PDBsum" id="4YA1"/>
<dbReference type="PDBsum" id="4YA2"/>
<dbReference type="PDBsum" id="4YA3"/>
<dbReference type="PDBsum" id="4YA4"/>
<dbReference type="PDBsum" id="4YA5"/>
<dbReference type="PDBsum" id="4YA7"/>
<dbReference type="PDBsum" id="4YA9"/>
<dbReference type="PDBsum" id="4Z1L"/>
<dbReference type="PDBsum" id="5A5B"/>
<dbReference type="PDBsum" id="5AHJ"/>
<dbReference type="PDBsum" id="5BOU"/>
<dbReference type="PDBsum" id="5BXL"/>
<dbReference type="PDBsum" id="5BXN"/>
<dbReference type="PDBsum" id="5CGF"/>
<dbReference type="PDBsum" id="5CGG"/>
<dbReference type="PDBsum" id="5CGH"/>
<dbReference type="PDBsum" id="5CGI"/>
<dbReference type="PDBsum" id="5CZ4"/>
<dbReference type="PDBsum" id="5CZ5"/>
<dbReference type="PDBsum" id="5CZ6"/>
<dbReference type="PDBsum" id="5CZ7"/>
<dbReference type="PDBsum" id="5CZ8"/>
<dbReference type="PDBsum" id="5CZ9"/>
<dbReference type="PDBsum" id="5CZA"/>
<dbReference type="PDBsum" id="5D0S"/>
<dbReference type="PDBsum" id="5D0T"/>
<dbReference type="PDBsum" id="5D0V"/>
<dbReference type="PDBsum" id="5D0W"/>
<dbReference type="PDBsum" id="5D0X"/>
<dbReference type="PDBsum" id="5D0Z"/>
<dbReference type="PDBsum" id="5DKI"/>
<dbReference type="PDBsum" id="5DKJ"/>
<dbReference type="PDBsum" id="5FG7"/>
<dbReference type="PDBsum" id="5FG9"/>
<dbReference type="PDBsum" id="5FGA"/>
<dbReference type="PDBsum" id="5FGD"/>
<dbReference type="PDBsum" id="5FGE"/>
<dbReference type="PDBsum" id="5FGF"/>
<dbReference type="PDBsum" id="5FGG"/>
<dbReference type="PDBsum" id="5FGH"/>
<dbReference type="PDBsum" id="5FGI"/>
<dbReference type="PDBsum" id="5FHS"/>
<dbReference type="PDBsum" id="5JHR"/>
<dbReference type="PDBsum" id="5JHS"/>
<dbReference type="PDBsum" id="5L52"/>
<dbReference type="PDBsum" id="5L54"/>
<dbReference type="PDBsum" id="5L55"/>
<dbReference type="PDBsum" id="5L5A"/>
<dbReference type="PDBsum" id="5L5B"/>
<dbReference type="PDBsum" id="5L5D"/>
<dbReference type="PDBsum" id="5L5E"/>
<dbReference type="PDBsum" id="5L5F"/>
<dbReference type="PDBsum" id="5L5H"/>
<dbReference type="PDBsum" id="5L5I"/>
<dbReference type="PDBsum" id="5L5J"/>
<dbReference type="PDBsum" id="5L5O"/>
<dbReference type="PDBsum" id="5L5P"/>
<dbReference type="PDBsum" id="5L5Q"/>
<dbReference type="PDBsum" id="5L5R"/>
<dbReference type="PDBsum" id="5L5S"/>
<dbReference type="PDBsum" id="5L5T"/>
<dbReference type="PDBsum" id="5L5U"/>
<dbReference type="PDBsum" id="5L5V"/>
<dbReference type="PDBsum" id="5L5W"/>
<dbReference type="PDBsum" id="5L5X"/>
<dbReference type="PDBsum" id="5L5Y"/>
<dbReference type="PDBsum" id="5L5Z"/>
<dbReference type="PDBsum" id="5L60"/>
<dbReference type="PDBsum" id="5L61"/>
<dbReference type="PDBsum" id="5L62"/>
<dbReference type="PDBsum" id="5L63"/>
<dbReference type="PDBsum" id="5L64"/>
<dbReference type="PDBsum" id="5L65"/>
<dbReference type="PDBsum" id="5L66"/>
<dbReference type="PDBsum" id="5L67"/>
<dbReference type="PDBsum" id="5L68"/>
<dbReference type="PDBsum" id="5L69"/>
<dbReference type="PDBsum" id="5L6A"/>
<dbReference type="PDBsum" id="5L6B"/>
<dbReference type="PDBsum" id="5L6C"/>
<dbReference type="PDBsum" id="5LAI"/>
<dbReference type="PDBsum" id="5LAJ"/>
<dbReference type="PDBsum" id="5LTT"/>
<dbReference type="PDBsum" id="5M2B"/>
<dbReference type="PDBsum" id="5MP9"/>
<dbReference type="PDBsum" id="5MPA"/>
<dbReference type="PDBsum" id="5MPB"/>
<dbReference type="PDBsum" id="5MPC"/>
<dbReference type="PDBsum" id="5NIF"/>
<dbReference type="PDBsum" id="5WVI"/>
<dbReference type="PDBsum" id="5WVK"/>
<dbReference type="PDBsum" id="6EF0"/>
<dbReference type="PDBsum" id="6EF1"/>
<dbReference type="PDBsum" id="6EF2"/>
<dbReference type="PDBsum" id="6EF3"/>
<dbReference type="PDBsum" id="6FVT"/>
<dbReference type="PDBsum" id="6FVU"/>
<dbReference type="PDBsum" id="6FVV"/>
<dbReference type="PDBsum" id="6FVW"/>
<dbReference type="PDBsum" id="6FVX"/>
<dbReference type="PDBsum" id="6FVY"/>
<dbReference type="PDBsum" id="6G7F"/>
<dbReference type="PDBsum" id="6G8M"/>
<dbReference type="PDBsum" id="6G8N"/>
<dbReference type="PDBsum" id="6GOP"/>
<dbReference type="PDBsum" id="6H39"/>
<dbReference type="PDBsum" id="6HTB"/>
<dbReference type="PDBsum" id="6HTC"/>
<dbReference type="PDBsum" id="6HTD"/>
<dbReference type="PDBsum" id="6HTP"/>
<dbReference type="PDBsum" id="6HTR"/>
<dbReference type="PDBsum" id="6HUB"/>
<dbReference type="PDBsum" id="6HUC"/>
<dbReference type="PDBsum" id="6HUQ"/>
<dbReference type="PDBsum" id="6HUU"/>
<dbReference type="PDBsum" id="6HUV"/>
<dbReference type="PDBsum" id="6HV3"/>
<dbReference type="PDBsum" id="6HV4"/>
<dbReference type="PDBsum" id="6HV5"/>
<dbReference type="PDBsum" id="6HV7"/>
<dbReference type="PDBsum" id="6HVA"/>
<dbReference type="PDBsum" id="6HVR"/>
<dbReference type="PDBsum" id="6HVS"/>
<dbReference type="PDBsum" id="6HVT"/>
<dbReference type="PDBsum" id="6HVU"/>
<dbReference type="PDBsum" id="6HVV"/>
<dbReference type="PDBsum" id="6HVW"/>
<dbReference type="PDBsum" id="6HVX"/>
<dbReference type="PDBsum" id="6HVY"/>
<dbReference type="PDBsum" id="6HW0"/>
<dbReference type="PDBsum" id="6HW3"/>
<dbReference type="PDBsum" id="6HW4"/>
<dbReference type="PDBsum" id="6HW5"/>
<dbReference type="PDBsum" id="6HW6"/>
<dbReference type="PDBsum" id="6HW7"/>
<dbReference type="PDBsum" id="6HW8"/>
<dbReference type="PDBsum" id="6HW9"/>
<dbReference type="PDBsum" id="6HWA"/>
<dbReference type="PDBsum" id="6HWB"/>
<dbReference type="PDBsum" id="6HWC"/>
<dbReference type="PDBsum" id="6HWD"/>
<dbReference type="PDBsum" id="6HWE"/>
<dbReference type="PDBsum" id="6HWF"/>
<dbReference type="PDBsum" id="6J2C"/>
<dbReference type="PDBsum" id="6J2N"/>
<dbReference type="PDBsum" id="6J2Q"/>
<dbReference type="PDBsum" id="6J2X"/>
<dbReference type="PDBsum" id="6J30"/>
<dbReference type="PDBsum" id="6ZOU"/>
<dbReference type="PDBsum" id="6ZP6"/>
<dbReference type="PDBsum" id="6ZP8"/>
<dbReference type="PDBsum" id="7LS5"/>
<dbReference type="PDBsum" id="7LS6"/>
<dbReference type="PDBsum" id="7LSX"/>
<dbReference type="PDBsum" id="7O2L"/>
<dbReference type="PDBsum" id="7QO3"/>
<dbReference type="PDBsum" id="7QO5"/>
<dbReference type="PDBsum" id="7TEJ"/>
<dbReference type="PDBsum" id="7TEO"/>
<dbReference type="PDBsum" id="8BW1"/>
<dbReference type="PDBsum" id="8OHZ"/>
<dbReference type="PDBsum" id="8OI1"/>
<dbReference type="PDBsum" id="8OLR"/>
<dbReference type="PDBsum" id="8RHJ"/>
<dbReference type="PDBsum" id="8RHK"/>
<dbReference type="PDBsum" id="8RHL"/>
<dbReference type="PDBsum" id="8RVL"/>
<dbReference type="PDBsum" id="8RVO"/>
<dbReference type="PDBsum" id="8RVP"/>
<dbReference type="PDBsum" id="8RVQ"/>
<dbReference type="PDBsum" id="8T08"/>
<dbReference type="PDBsum" id="8T0M"/>
<dbReference type="PDBsum" id="8U6Y"/>
<dbReference type="PDBsum" id="8U7U"/>
<dbReference type="PDBsum" id="9D0T"/>
<dbReference type="PDBsum" id="9EY9"/>
<dbReference type="PDBsum" id="9FST"/>
<dbReference type="PDBsum" id="9FSV"/>
<dbReference type="PDBsum" id="9FT0"/>
<dbReference type="PDBsum" id="9FT1"/>
<dbReference type="PDBsum" id="9GBK"/>
<dbReference type="EMDB" id="EMD-14082"/>
<dbReference type="EMDB" id="EMD-14084"/>
<dbReference type="EMDB" id="EMD-19523"/>
<dbReference type="EMDB" id="EMD-19527"/>
<dbReference type="EMDB" id="EMD-19528"/>
<dbReference type="EMDB" id="EMD-19529"/>
<dbReference type="EMDB" id="EMD-23502"/>
<dbReference type="EMDB" id="EMD-23503"/>
<dbReference type="EMDB" id="EMD-23508"/>
<dbReference type="EMDB" id="EMD-25847"/>
<dbReference type="EMDB" id="EMD-25848"/>
<dbReference type="EMDB" id="EMD-3534"/>
<dbReference type="EMDB" id="EMD-3535"/>
<dbReference type="EMDB" id="EMD-3536"/>
<dbReference type="EMDB" id="EMD-3537"/>
<dbReference type="EMDB" id="EMD-40938"/>
<dbReference type="EMDB" id="EMD-40944"/>
<dbReference type="EMDB" id="EMD-41963"/>
<dbReference type="EMDB" id="EMD-41993"/>
<dbReference type="EMDB" id="EMD-4321"/>
<dbReference type="EMDB" id="EMD-4322"/>
<dbReference type="EMDB" id="EMD-4323"/>
<dbReference type="EMDB" id="EMD-4324"/>
<dbReference type="EMDB" id="EMD-46461"/>
<dbReference type="EMDB" id="EMD-51221"/>
<dbReference type="EMDB" id="EMD-6693"/>
<dbReference type="EMDB" id="EMD-6694"/>
<dbReference type="EMDB" id="EMD-9042"/>
<dbReference type="EMDB" id="EMD-9043"/>
<dbReference type="EMDB" id="EMD-9044"/>
<dbReference type="EMDB" id="EMD-9045"/>
<dbReference type="EMDB" id="EMD-9769"/>
<dbReference type="EMDB" id="EMD-9770"/>
<dbReference type="EMDB" id="EMD-9771"/>
<dbReference type="EMDB" id="EMD-9772"/>
<dbReference type="EMDB" id="EMD-9773"/>
<dbReference type="SMR" id="P40303"/>
<dbReference type="BioGRID" id="34364">
    <property type="interactions" value="301"/>
</dbReference>
<dbReference type="ComplexPortal" id="CPX-2262">
    <property type="entry name" value="26S proteasome complex"/>
</dbReference>
<dbReference type="DIP" id="DIP-4844N"/>
<dbReference type="FunCoup" id="P40303">
    <property type="interactions" value="1054"/>
</dbReference>
<dbReference type="IntAct" id="P40303">
    <property type="interactions" value="58"/>
</dbReference>
<dbReference type="MINT" id="P40303"/>
<dbReference type="STRING" id="4932.YOL038W"/>
<dbReference type="iPTMnet" id="P40303"/>
<dbReference type="PaxDb" id="4932-YOL038W"/>
<dbReference type="PeptideAtlas" id="P40303"/>
<dbReference type="EnsemblFungi" id="YOL038W_mRNA">
    <property type="protein sequence ID" value="YOL038W"/>
    <property type="gene ID" value="YOL038W"/>
</dbReference>
<dbReference type="GeneID" id="854119"/>
<dbReference type="KEGG" id="sce:YOL038W"/>
<dbReference type="AGR" id="SGD:S000005398"/>
<dbReference type="SGD" id="S000005398">
    <property type="gene designation" value="PRE6"/>
</dbReference>
<dbReference type="VEuPathDB" id="FungiDB:YOL038W"/>
<dbReference type="eggNOG" id="KOG0183">
    <property type="taxonomic scope" value="Eukaryota"/>
</dbReference>
<dbReference type="GeneTree" id="ENSGT00940000167759"/>
<dbReference type="HOGENOM" id="CLU_035750_4_0_1"/>
<dbReference type="InParanoid" id="P40303"/>
<dbReference type="OMA" id="ICMLDHH"/>
<dbReference type="OrthoDB" id="431557at2759"/>
<dbReference type="BioCyc" id="YEAST:G3O-33452-MONOMER"/>
<dbReference type="Reactome" id="R-SCE-1236978">
    <property type="pathway name" value="Cross-presentation of soluble exogenous antigens (endosomes)"/>
</dbReference>
<dbReference type="Reactome" id="R-SCE-5668541">
    <property type="pathway name" value="TNFR2 non-canonical NF-kB pathway"/>
</dbReference>
<dbReference type="Reactome" id="R-SCE-5687128">
    <property type="pathway name" value="MAPK6/MAPK4 signaling"/>
</dbReference>
<dbReference type="Reactome" id="R-SCE-5689880">
    <property type="pathway name" value="Ub-specific processing proteases"/>
</dbReference>
<dbReference type="Reactome" id="R-SCE-68949">
    <property type="pathway name" value="Orc1 removal from chromatin"/>
</dbReference>
<dbReference type="Reactome" id="R-SCE-69017">
    <property type="pathway name" value="CDK-mediated phosphorylation and removal of Cdc6"/>
</dbReference>
<dbReference type="Reactome" id="R-SCE-69601">
    <property type="pathway name" value="Ubiquitin Mediated Degradation of Phosphorylated Cdc25A"/>
</dbReference>
<dbReference type="Reactome" id="R-SCE-8854050">
    <property type="pathway name" value="FBXL7 down-regulates AURKA during mitotic entry and in early mitosis"/>
</dbReference>
<dbReference type="Reactome" id="R-SCE-8948751">
    <property type="pathway name" value="Regulation of PTEN stability and activity"/>
</dbReference>
<dbReference type="Reactome" id="R-SCE-8951664">
    <property type="pathway name" value="Neddylation"/>
</dbReference>
<dbReference type="Reactome" id="R-SCE-9755511">
    <property type="pathway name" value="KEAP1-NFE2L2 pathway"/>
</dbReference>
<dbReference type="Reactome" id="R-SCE-983168">
    <property type="pathway name" value="Antigen processing: Ubiquitination &amp; Proteasome degradation"/>
</dbReference>
<dbReference type="Reactome" id="R-SCE-9907900">
    <property type="pathway name" value="Proteasome assembly"/>
</dbReference>
<dbReference type="BioGRID-ORCS" id="854119">
    <property type="hits" value="8 hits in 10 CRISPR screens"/>
</dbReference>
<dbReference type="EvolutionaryTrace" id="P40303"/>
<dbReference type="PRO" id="PR:P40303"/>
<dbReference type="Proteomes" id="UP000002311">
    <property type="component" value="Chromosome XV"/>
</dbReference>
<dbReference type="RNAct" id="P40303">
    <property type="molecule type" value="protein"/>
</dbReference>
<dbReference type="GO" id="GO:0005739">
    <property type="term" value="C:mitochondrion"/>
    <property type="evidence" value="ECO:0000314"/>
    <property type="project" value="SGD"/>
</dbReference>
<dbReference type="GO" id="GO:0042175">
    <property type="term" value="C:nuclear outer membrane-endoplasmic reticulum membrane network"/>
    <property type="evidence" value="ECO:0000314"/>
    <property type="project" value="SGD"/>
</dbReference>
<dbReference type="GO" id="GO:0005634">
    <property type="term" value="C:nucleus"/>
    <property type="evidence" value="ECO:0000314"/>
    <property type="project" value="SGD"/>
</dbReference>
<dbReference type="GO" id="GO:0000502">
    <property type="term" value="C:proteasome complex"/>
    <property type="evidence" value="ECO:0000353"/>
    <property type="project" value="ComplexPortal"/>
</dbReference>
<dbReference type="GO" id="GO:0019773">
    <property type="term" value="C:proteasome core complex, alpha-subunit complex"/>
    <property type="evidence" value="ECO:0000314"/>
    <property type="project" value="SGD"/>
</dbReference>
<dbReference type="GO" id="GO:0034515">
    <property type="term" value="C:proteasome storage granule"/>
    <property type="evidence" value="ECO:0000314"/>
    <property type="project" value="SGD"/>
</dbReference>
<dbReference type="GO" id="GO:0010499">
    <property type="term" value="P:proteasomal ubiquitin-independent protein catabolic process"/>
    <property type="evidence" value="ECO:0000314"/>
    <property type="project" value="SGD"/>
</dbReference>
<dbReference type="GO" id="GO:0043161">
    <property type="term" value="P:proteasome-mediated ubiquitin-dependent protein catabolic process"/>
    <property type="evidence" value="ECO:0000314"/>
    <property type="project" value="SGD"/>
</dbReference>
<dbReference type="CDD" id="cd03755">
    <property type="entry name" value="proteasome_alpha_type_7"/>
    <property type="match status" value="1"/>
</dbReference>
<dbReference type="FunFam" id="3.60.20.10:FF:000004">
    <property type="entry name" value="Proteasome subunit alpha type-4"/>
    <property type="match status" value="1"/>
</dbReference>
<dbReference type="Gene3D" id="3.60.20.10">
    <property type="entry name" value="Glutamine Phosphoribosylpyrophosphate, subunit 1, domain 1"/>
    <property type="match status" value="1"/>
</dbReference>
<dbReference type="InterPro" id="IPR029055">
    <property type="entry name" value="Ntn_hydrolases_N"/>
</dbReference>
<dbReference type="InterPro" id="IPR050115">
    <property type="entry name" value="Proteasome_alpha"/>
</dbReference>
<dbReference type="InterPro" id="IPR023332">
    <property type="entry name" value="Proteasome_alpha-type"/>
</dbReference>
<dbReference type="InterPro" id="IPR000426">
    <property type="entry name" value="Proteasome_asu_N"/>
</dbReference>
<dbReference type="InterPro" id="IPR016050">
    <property type="entry name" value="Proteasome_bsu_CS"/>
</dbReference>
<dbReference type="InterPro" id="IPR001353">
    <property type="entry name" value="Proteasome_sua/b"/>
</dbReference>
<dbReference type="NCBIfam" id="NF003075">
    <property type="entry name" value="PRK03996.1"/>
    <property type="match status" value="1"/>
</dbReference>
<dbReference type="PANTHER" id="PTHR11599">
    <property type="entry name" value="PROTEASOME SUBUNIT ALPHA/BETA"/>
    <property type="match status" value="1"/>
</dbReference>
<dbReference type="Pfam" id="PF00227">
    <property type="entry name" value="Proteasome"/>
    <property type="match status" value="1"/>
</dbReference>
<dbReference type="Pfam" id="PF10584">
    <property type="entry name" value="Proteasome_A_N"/>
    <property type="match status" value="1"/>
</dbReference>
<dbReference type="SMART" id="SM00948">
    <property type="entry name" value="Proteasome_A_N"/>
    <property type="match status" value="1"/>
</dbReference>
<dbReference type="SUPFAM" id="SSF56235">
    <property type="entry name" value="N-terminal nucleophile aminohydrolases (Ntn hydrolases)"/>
    <property type="match status" value="1"/>
</dbReference>
<dbReference type="PROSITE" id="PS00388">
    <property type="entry name" value="PROTEASOME_ALPHA_1"/>
    <property type="match status" value="1"/>
</dbReference>
<dbReference type="PROSITE" id="PS51475">
    <property type="entry name" value="PROTEASOME_ALPHA_2"/>
    <property type="match status" value="1"/>
</dbReference>
<keyword id="KW-0002">3D-structure</keyword>
<keyword id="KW-0963">Cytoplasm</keyword>
<keyword id="KW-0903">Direct protein sequencing</keyword>
<keyword id="KW-0539">Nucleus</keyword>
<keyword id="KW-0597">Phosphoprotein</keyword>
<keyword id="KW-0647">Proteasome</keyword>
<keyword id="KW-1185">Reference proteome</keyword>
<proteinExistence type="evidence at protein level"/>
<feature type="chain" id="PRO_0000124165" description="Proteasome subunit alpha type-4">
    <location>
        <begin position="1"/>
        <end position="254"/>
    </location>
</feature>
<feature type="region of interest" description="Disordered" evidence="2">
    <location>
        <begin position="235"/>
        <end position="254"/>
    </location>
</feature>
<feature type="compositionally biased region" description="Basic and acidic residues" evidence="2">
    <location>
        <begin position="237"/>
        <end position="248"/>
    </location>
</feature>
<feature type="modified residue" description="Phosphothreonine" evidence="7">
    <location>
        <position position="60"/>
    </location>
</feature>
<feature type="strand" evidence="12">
    <location>
        <begin position="4"/>
        <end position="6"/>
    </location>
</feature>
<feature type="strand" evidence="8">
    <location>
        <begin position="7"/>
        <end position="10"/>
    </location>
</feature>
<feature type="turn" evidence="9">
    <location>
        <begin position="13"/>
        <end position="15"/>
    </location>
</feature>
<feature type="helix" evidence="9">
    <location>
        <begin position="18"/>
        <end position="27"/>
    </location>
</feature>
<feature type="strand" evidence="9">
    <location>
        <begin position="33"/>
        <end position="37"/>
    </location>
</feature>
<feature type="strand" evidence="9">
    <location>
        <begin position="42"/>
        <end position="47"/>
    </location>
</feature>
<feature type="strand" evidence="14">
    <location>
        <begin position="53"/>
        <end position="55"/>
    </location>
</feature>
<feature type="turn" evidence="9">
    <location>
        <begin position="57"/>
        <end position="59"/>
    </location>
</feature>
<feature type="strand" evidence="9">
    <location>
        <begin position="63"/>
        <end position="68"/>
    </location>
</feature>
<feature type="strand" evidence="9">
    <location>
        <begin position="71"/>
        <end position="77"/>
    </location>
</feature>
<feature type="helix" evidence="9">
    <location>
        <begin position="79"/>
        <end position="100"/>
    </location>
</feature>
<feature type="helix" evidence="9">
    <location>
        <begin position="106"/>
        <end position="119"/>
    </location>
</feature>
<feature type="turn" evidence="10">
    <location>
        <begin position="120"/>
        <end position="122"/>
    </location>
</feature>
<feature type="strand" evidence="13">
    <location>
        <begin position="123"/>
        <end position="126"/>
    </location>
</feature>
<feature type="strand" evidence="9">
    <location>
        <begin position="130"/>
        <end position="137"/>
    </location>
</feature>
<feature type="strand" evidence="9">
    <location>
        <begin position="146"/>
        <end position="150"/>
    </location>
</feature>
<feature type="helix" evidence="15">
    <location>
        <begin position="152"/>
        <end position="154"/>
    </location>
</feature>
<feature type="strand" evidence="9">
    <location>
        <begin position="156"/>
        <end position="165"/>
    </location>
</feature>
<feature type="helix" evidence="9">
    <location>
        <begin position="168"/>
        <end position="176"/>
    </location>
</feature>
<feature type="strand" evidence="13">
    <location>
        <begin position="181"/>
        <end position="183"/>
    </location>
</feature>
<feature type="helix" evidence="9">
    <location>
        <begin position="188"/>
        <end position="203"/>
    </location>
</feature>
<feature type="strand" evidence="11">
    <location>
        <begin position="204"/>
        <end position="207"/>
    </location>
</feature>
<feature type="strand" evidence="9">
    <location>
        <begin position="210"/>
        <end position="216"/>
    </location>
</feature>
<feature type="turn" evidence="9">
    <location>
        <begin position="217"/>
        <end position="219"/>
    </location>
</feature>
<feature type="strand" evidence="9">
    <location>
        <begin position="220"/>
        <end position="223"/>
    </location>
</feature>
<feature type="helix" evidence="9">
    <location>
        <begin position="226"/>
        <end position="236"/>
    </location>
</feature>
<feature type="helix" evidence="9">
    <location>
        <begin position="238"/>
        <end position="241"/>
    </location>
</feature>
<evidence type="ECO:0000255" key="1">
    <source>
        <dbReference type="PROSITE-ProRule" id="PRU00808"/>
    </source>
</evidence>
<evidence type="ECO:0000256" key="2">
    <source>
        <dbReference type="SAM" id="MobiDB-lite"/>
    </source>
</evidence>
<evidence type="ECO:0000269" key="3">
    <source>
    </source>
</evidence>
<evidence type="ECO:0000269" key="4">
    <source>
    </source>
</evidence>
<evidence type="ECO:0000269" key="5">
    <source>
    </source>
</evidence>
<evidence type="ECO:0000269" key="6">
    <source>
    </source>
</evidence>
<evidence type="ECO:0007744" key="7">
    <source>
    </source>
</evidence>
<evidence type="ECO:0007829" key="8">
    <source>
        <dbReference type="PDB" id="1FNT"/>
    </source>
</evidence>
<evidence type="ECO:0007829" key="9">
    <source>
        <dbReference type="PDB" id="1RYP"/>
    </source>
</evidence>
<evidence type="ECO:0007829" key="10">
    <source>
        <dbReference type="PDB" id="4G4S"/>
    </source>
</evidence>
<evidence type="ECO:0007829" key="11">
    <source>
        <dbReference type="PDB" id="4R17"/>
    </source>
</evidence>
<evidence type="ECO:0007829" key="12">
    <source>
        <dbReference type="PDB" id="8RVP"/>
    </source>
</evidence>
<evidence type="ECO:0007829" key="13">
    <source>
        <dbReference type="PDB" id="8RVQ"/>
    </source>
</evidence>
<evidence type="ECO:0007829" key="14">
    <source>
        <dbReference type="PDB" id="9D0T"/>
    </source>
</evidence>
<evidence type="ECO:0007829" key="15">
    <source>
        <dbReference type="PDB" id="9GBK"/>
    </source>
</evidence>